<name>ACK1_HUMAN</name>
<protein>
    <recommendedName>
        <fullName>Activated CDC42 kinase 1</fullName>
        <shortName>ACK-1</shortName>
        <ecNumber evidence="8 15 17 24 28">2.7.10.2</ecNumber>
        <ecNumber evidence="15 24">2.7.11.1</ecNumber>
    </recommendedName>
    <alternativeName>
        <fullName>Tyrosine kinase non-receptor protein 2</fullName>
    </alternativeName>
</protein>
<evidence type="ECO:0000250" key="1"/>
<evidence type="ECO:0000250" key="2">
    <source>
        <dbReference type="UniProtKB" id="O54967"/>
    </source>
</evidence>
<evidence type="ECO:0000255" key="3">
    <source>
        <dbReference type="PROSITE-ProRule" id="PRU00159"/>
    </source>
</evidence>
<evidence type="ECO:0000255" key="4">
    <source>
        <dbReference type="PROSITE-ProRule" id="PRU00192"/>
    </source>
</evidence>
<evidence type="ECO:0000255" key="5">
    <source>
        <dbReference type="PROSITE-ProRule" id="PRU10028"/>
    </source>
</evidence>
<evidence type="ECO:0000256" key="6">
    <source>
        <dbReference type="SAM" id="MobiDB-lite"/>
    </source>
</evidence>
<evidence type="ECO:0000269" key="7">
    <source>
    </source>
</evidence>
<evidence type="ECO:0000269" key="8">
    <source>
    </source>
</evidence>
<evidence type="ECO:0000269" key="9">
    <source>
    </source>
</evidence>
<evidence type="ECO:0000269" key="10">
    <source>
    </source>
</evidence>
<evidence type="ECO:0000269" key="11">
    <source>
    </source>
</evidence>
<evidence type="ECO:0000269" key="12">
    <source>
    </source>
</evidence>
<evidence type="ECO:0000269" key="13">
    <source>
    </source>
</evidence>
<evidence type="ECO:0000269" key="14">
    <source>
    </source>
</evidence>
<evidence type="ECO:0000269" key="15">
    <source>
    </source>
</evidence>
<evidence type="ECO:0000269" key="16">
    <source>
    </source>
</evidence>
<evidence type="ECO:0000269" key="17">
    <source>
    </source>
</evidence>
<evidence type="ECO:0000269" key="18">
    <source>
    </source>
</evidence>
<evidence type="ECO:0000269" key="19">
    <source>
    </source>
</evidence>
<evidence type="ECO:0000269" key="20">
    <source>
    </source>
</evidence>
<evidence type="ECO:0000269" key="21">
    <source>
    </source>
</evidence>
<evidence type="ECO:0000269" key="22">
    <source>
    </source>
</evidence>
<evidence type="ECO:0000269" key="23">
    <source>
    </source>
</evidence>
<evidence type="ECO:0000269" key="24">
    <source>
    </source>
</evidence>
<evidence type="ECO:0000269" key="25">
    <source>
    </source>
</evidence>
<evidence type="ECO:0000269" key="26">
    <source>
    </source>
</evidence>
<evidence type="ECO:0000269" key="27">
    <source>
    </source>
</evidence>
<evidence type="ECO:0000269" key="28">
    <source>
    </source>
</evidence>
<evidence type="ECO:0000269" key="29">
    <source>
    </source>
</evidence>
<evidence type="ECO:0000269" key="30">
    <source>
    </source>
</evidence>
<evidence type="ECO:0000269" key="31">
    <source>
    </source>
</evidence>
<evidence type="ECO:0000269" key="32">
    <source>
    </source>
</evidence>
<evidence type="ECO:0000269" key="33">
    <source>
    </source>
</evidence>
<evidence type="ECO:0000269" key="34">
    <source>
    </source>
</evidence>
<evidence type="ECO:0000269" key="35">
    <source>
    </source>
</evidence>
<evidence type="ECO:0000303" key="36">
    <source>
    </source>
</evidence>
<evidence type="ECO:0000303" key="37">
    <source>
    </source>
</evidence>
<evidence type="ECO:0000305" key="38"/>
<evidence type="ECO:0007744" key="39">
    <source>
    </source>
</evidence>
<evidence type="ECO:0007744" key="40">
    <source>
    </source>
</evidence>
<evidence type="ECO:0007829" key="41">
    <source>
        <dbReference type="PDB" id="1CF4"/>
    </source>
</evidence>
<evidence type="ECO:0007829" key="42">
    <source>
        <dbReference type="PDB" id="1U46"/>
    </source>
</evidence>
<evidence type="ECO:0007829" key="43">
    <source>
        <dbReference type="PDB" id="3EQP"/>
    </source>
</evidence>
<evidence type="ECO:0007829" key="44">
    <source>
        <dbReference type="PDB" id="3EQR"/>
    </source>
</evidence>
<evidence type="ECO:0007829" key="45">
    <source>
        <dbReference type="PDB" id="4HZR"/>
    </source>
</evidence>
<evidence type="ECO:0007829" key="46">
    <source>
        <dbReference type="PDB" id="4HZS"/>
    </source>
</evidence>
<evidence type="ECO:0007829" key="47">
    <source>
        <dbReference type="PDB" id="8FE9"/>
    </source>
</evidence>
<gene>
    <name type="primary">TNK2</name>
    <name type="synonym">ACK1</name>
</gene>
<keyword id="KW-0002">3D-structure</keyword>
<keyword id="KW-0025">Alternative splicing</keyword>
<keyword id="KW-0067">ATP-binding</keyword>
<keyword id="KW-0965">Cell junction</keyword>
<keyword id="KW-1003">Cell membrane</keyword>
<keyword id="KW-0168">Coated pit</keyword>
<keyword id="KW-0963">Cytoplasm</keyword>
<keyword id="KW-0968">Cytoplasmic vesicle</keyword>
<keyword id="KW-0254">Endocytosis</keyword>
<keyword id="KW-0967">Endosome</keyword>
<keyword id="KW-0418">Kinase</keyword>
<keyword id="KW-0460">Magnesium</keyword>
<keyword id="KW-0472">Membrane</keyword>
<keyword id="KW-0479">Metal-binding</keyword>
<keyword id="KW-0488">Methylation</keyword>
<keyword id="KW-0547">Nucleotide-binding</keyword>
<keyword id="KW-0539">Nucleus</keyword>
<keyword id="KW-0597">Phosphoprotein</keyword>
<keyword id="KW-1267">Proteomics identification</keyword>
<keyword id="KW-1185">Reference proteome</keyword>
<keyword id="KW-0723">Serine/threonine-protein kinase</keyword>
<keyword id="KW-0728">SH3 domain</keyword>
<keyword id="KW-0808">Transferase</keyword>
<keyword id="KW-0829">Tyrosine-protein kinase</keyword>
<keyword id="KW-0832">Ubl conjugation</keyword>
<proteinExistence type="evidence at protein level"/>
<comment type="function">
    <text evidence="8 9 14 15 17 18 21 22 26 27 28 29">Non-receptor tyrosine-protein and serine/threonine-protein kinase that is implicated in cell spreading and migration, cell survival, cell growth and proliferation. Transduces extracellular signals to cytosolic and nuclear effectors. Phosphorylates AKT1, AR, MCF2, WASL and WWOX. Implicated in trafficking and clathrin-mediated endocytosis through binding to epidermal growth factor receptor (EGFR) and clathrin. Binds to both poly- and mono-ubiquitin and regulates ligand-induced degradation of EGFR, thereby contributing to the accumulation of EGFR at the limiting membrane of early endosomes. Downstream effector of CDC42 which mediates CDC42-dependent cell migration via phosphorylation of BCAR1. May be involved both in adult synaptic function and plasticity and in brain development. Activates AKT1 by phosphorylating it on 'Tyr-176'. Phosphorylates AR on 'Tyr-267' and 'Tyr-363' thereby promoting its recruitment to androgen-responsive enhancers (AREs). Phosphorylates WWOX on 'Tyr-287'. Phosphorylates MCF2, thereby enhancing its activity as a guanine nucleotide exchange factor (GEF) toward Rho family proteins. Contributes to the control of AXL receptor levels. Confers metastatic properties on cancer cells and promotes tumor growth by negatively regulating tumor suppressor such as WWOX and positively regulating pro-survival factors such as AKT1 and AR. Phosphorylates WASP (PubMed:20110370).</text>
</comment>
<comment type="catalytic activity">
    <reaction evidence="5 8 15 17 24 28">
        <text>L-tyrosyl-[protein] + ATP = O-phospho-L-tyrosyl-[protein] + ADP + H(+)</text>
        <dbReference type="Rhea" id="RHEA:10596"/>
        <dbReference type="Rhea" id="RHEA-COMP:10136"/>
        <dbReference type="Rhea" id="RHEA-COMP:20101"/>
        <dbReference type="ChEBI" id="CHEBI:15378"/>
        <dbReference type="ChEBI" id="CHEBI:30616"/>
        <dbReference type="ChEBI" id="CHEBI:46858"/>
        <dbReference type="ChEBI" id="CHEBI:61978"/>
        <dbReference type="ChEBI" id="CHEBI:456216"/>
        <dbReference type="EC" id="2.7.10.2"/>
    </reaction>
</comment>
<comment type="catalytic activity">
    <reaction evidence="15 24">
        <text>L-seryl-[protein] + ATP = O-phospho-L-seryl-[protein] + ADP + H(+)</text>
        <dbReference type="Rhea" id="RHEA:17989"/>
        <dbReference type="Rhea" id="RHEA-COMP:9863"/>
        <dbReference type="Rhea" id="RHEA-COMP:11604"/>
        <dbReference type="ChEBI" id="CHEBI:15378"/>
        <dbReference type="ChEBI" id="CHEBI:29999"/>
        <dbReference type="ChEBI" id="CHEBI:30616"/>
        <dbReference type="ChEBI" id="CHEBI:83421"/>
        <dbReference type="ChEBI" id="CHEBI:456216"/>
        <dbReference type="EC" id="2.7.11.1"/>
    </reaction>
</comment>
<comment type="catalytic activity">
    <reaction evidence="15 24">
        <text>L-threonyl-[protein] + ATP = O-phospho-L-threonyl-[protein] + ADP + H(+)</text>
        <dbReference type="Rhea" id="RHEA:46608"/>
        <dbReference type="Rhea" id="RHEA-COMP:11060"/>
        <dbReference type="Rhea" id="RHEA-COMP:11605"/>
        <dbReference type="ChEBI" id="CHEBI:15378"/>
        <dbReference type="ChEBI" id="CHEBI:30013"/>
        <dbReference type="ChEBI" id="CHEBI:30616"/>
        <dbReference type="ChEBI" id="CHEBI:61977"/>
        <dbReference type="ChEBI" id="CHEBI:456216"/>
        <dbReference type="EC" id="2.7.11.1"/>
    </reaction>
</comment>
<comment type="cofactor">
    <cofactor evidence="8 15 28">
        <name>Mg(2+)</name>
        <dbReference type="ChEBI" id="CHEBI:18420"/>
    </cofactor>
</comment>
<comment type="activity regulation">
    <text evidence="29 30">Inhibited by AIM-100 (4-amino-5,6-biaryl-furo[2,3-d]pyrimidine), which suppresses activating phosphorylation at Tyr-284. Repressed by dasatinib.</text>
</comment>
<comment type="subunit">
    <text evidence="1 7 13 15 16 18 20 23 24 25 26 28 31 33 34 35">Interacts with NEDD4 (via WW3 domain). NEDD4L and EGF promote association with NEDD4 (By similarity). Homodimer. Interacts with AR, CDC42, WWASL and WWOX. Interacts with CSPG4 (activated). Interacts with MERTK (activated); stimulates autophosphorylation. May interact (phosphorylated) with HSP90AB1; maintains kinase activity. Interacts with NPHP1. Interacts with SNX9 (via SH3 domain). Interacts with SRC (via SH2 and SH3 domain). Interacts with EGFR, and this interaction is dependent on EGF stimulation and kinase activity of EGFR. Interacts (via kinase domain) with AKT1. Part of a collagen stimulated complex involved in cell migration composed of CDC42, CRK, TNK2 and BCAR1/p130cas. Interacts with BCAR1/p130cas via SH3 domains. Forms complexes with GRB2 and numerous receptor tyrosine kinases (RTK) including LTK, AXL or PDGFRL, in which GRB2 promotes RTK recruitment by TNK2.</text>
</comment>
<comment type="interaction">
    <interactant intactId="EBI-603457">
        <id>Q07912</id>
    </interactant>
    <interactant intactId="EBI-745213">
        <id>P29972</id>
        <label>AQP1</label>
    </interactant>
    <organismsDiffer>false</organismsDiffer>
    <experiments>3</experiments>
</comment>
<comment type="interaction">
    <interactant intactId="EBI-603457">
        <id>Q07912</id>
    </interactant>
    <interactant intactId="EBI-702093">
        <id>P56945</id>
        <label>BCAR1</label>
    </interactant>
    <organismsDiffer>false</organismsDiffer>
    <experiments>5</experiments>
</comment>
<comment type="interaction">
    <interactant intactId="EBI-603457">
        <id>Q07912</id>
    </interactant>
    <interactant intactId="EBI-287394">
        <id>P60953-2</id>
        <label>CDC42</label>
    </interactant>
    <organismsDiffer>false</organismsDiffer>
    <experiments>2</experiments>
</comment>
<comment type="interaction">
    <interactant intactId="EBI-603457">
        <id>Q07912</id>
    </interactant>
    <interactant intactId="EBI-354967">
        <id>Q00610</id>
        <label>CLTC</label>
    </interactant>
    <organismsDiffer>false</organismsDiffer>
    <experiments>2</experiments>
</comment>
<comment type="interaction">
    <interactant intactId="EBI-603457">
        <id>Q07912</id>
    </interactant>
    <interactant intactId="EBI-750827">
        <id>P07902</id>
        <label>GALT</label>
    </interactant>
    <organismsDiffer>false</organismsDiffer>
    <experiments>3</experiments>
</comment>
<comment type="interaction">
    <interactant intactId="EBI-603457">
        <id>Q07912</id>
    </interactant>
    <interactant intactId="EBI-352572">
        <id>P08238</id>
        <label>HSP90AB1</label>
    </interactant>
    <organismsDiffer>false</organismsDiffer>
    <experiments>3</experiments>
</comment>
<comment type="interaction">
    <interactant intactId="EBI-603457">
        <id>Q07912</id>
    </interactant>
    <interactant intactId="EBI-740364">
        <id>Q9HC98</id>
        <label>NEK6</label>
    </interactant>
    <organismsDiffer>false</organismsDiffer>
    <experiments>3</experiments>
</comment>
<comment type="interaction">
    <interactant intactId="EBI-603457">
        <id>Q07912</id>
    </interactant>
    <interactant intactId="EBI-945833">
        <id>Q7Z3S9</id>
        <label>NOTCH2NLA</label>
    </interactant>
    <organismsDiffer>false</organismsDiffer>
    <experiments>3</experiments>
</comment>
<comment type="interaction">
    <interactant intactId="EBI-603457">
        <id>Q07912</id>
    </interactant>
    <interactant intactId="EBI-6983382">
        <id>O60880</id>
        <label>SH2D1A</label>
    </interactant>
    <organismsDiffer>false</organismsDiffer>
    <experiments>3</experiments>
</comment>
<comment type="interaction">
    <interactant intactId="EBI-603457">
        <id>Q07912</id>
    </interactant>
    <interactant intactId="EBI-603457">
        <id>Q07912</id>
        <label>TNK2</label>
    </interactant>
    <organismsDiffer>false</organismsDiffer>
    <experiments>2</experiments>
</comment>
<comment type="interaction">
    <interactant intactId="EBI-11994780">
        <id>Q07912-2</id>
    </interactant>
    <interactant intactId="EBI-3867333">
        <id>A8MQ03</id>
        <label>CYSRT1</label>
    </interactant>
    <organismsDiffer>false</organismsDiffer>
    <experiments>3</experiments>
</comment>
<comment type="interaction">
    <interactant intactId="EBI-11994780">
        <id>Q07912-2</id>
    </interactant>
    <interactant intactId="EBI-10237931">
        <id>Q9BQC3</id>
        <label>DPH2</label>
    </interactant>
    <organismsDiffer>false</organismsDiffer>
    <experiments>3</experiments>
</comment>
<comment type="interaction">
    <interactant intactId="EBI-11994780">
        <id>Q07912-2</id>
    </interactant>
    <interactant intactId="EBI-750827">
        <id>P07902</id>
        <label>GALT</label>
    </interactant>
    <organismsDiffer>false</organismsDiffer>
    <experiments>3</experiments>
</comment>
<comment type="interaction">
    <interactant intactId="EBI-11994780">
        <id>Q07912-2</id>
    </interactant>
    <interactant intactId="EBI-79893">
        <id>Q92569</id>
        <label>PIK3R3</label>
    </interactant>
    <organismsDiffer>false</organismsDiffer>
    <experiments>3</experiments>
</comment>
<comment type="interaction">
    <interactant intactId="EBI-11994780">
        <id>Q07912-2</id>
    </interactant>
    <interactant intactId="EBI-6983382">
        <id>O60880</id>
        <label>SH2D1A</label>
    </interactant>
    <organismsDiffer>false</organismsDiffer>
    <experiments>3</experiments>
</comment>
<comment type="interaction">
    <interactant intactId="EBI-11994780">
        <id>Q07912-2</id>
    </interactant>
    <interactant intactId="EBI-3923013">
        <id>O14796</id>
        <label>SH2D1B</label>
    </interactant>
    <organismsDiffer>false</organismsDiffer>
    <experiments>3</experiments>
</comment>
<comment type="subcellular location">
    <subcellularLocation>
        <location evidence="28 31">Cell membrane</location>
    </subcellularLocation>
    <subcellularLocation>
        <location evidence="11 28">Nucleus</location>
    </subcellularLocation>
    <subcellularLocation>
        <location evidence="2">Endosome</location>
    </subcellularLocation>
    <subcellularLocation>
        <location evidence="38">Cell junction</location>
        <location evidence="38">Adherens junction</location>
    </subcellularLocation>
    <subcellularLocation>
        <location>Cytoplasmic vesicle membrane</location>
        <topology>Peripheral membrane protein</topology>
        <orientation evidence="13">Cytoplasmic side</orientation>
    </subcellularLocation>
    <subcellularLocation>
        <location evidence="13 21">Cytoplasmic vesicle</location>
        <location evidence="13 21">Clathrin-coated vesicle</location>
    </subcellularLocation>
    <subcellularLocation>
        <location evidence="32">Membrane</location>
        <location evidence="32">Clathrin-coated pit</location>
    </subcellularLocation>
    <subcellularLocation>
        <location evidence="27">Cytoplasm</location>
        <location evidence="27">Perinuclear region</location>
    </subcellularLocation>
    <subcellularLocation>
        <location evidence="2">Cytoplasm</location>
        <location evidence="2">Cytosol</location>
    </subcellularLocation>
    <text evidence="2 28">The Tyr-284 phosphorylated form is found both in the membrane and nucleus (By similarity). Co-localizes with EGFR on endosomes (PubMed:20333297). Nuclear translocation is CDC42-dependent (By similarity). Detected in long filamentous cytosolic structures where it co-localizes with CTPS1 (By similarity).</text>
</comment>
<comment type="alternative products">
    <event type="alternative splicing"/>
    <isoform>
        <id>Q07912-1</id>
        <name>1</name>
        <sequence type="displayed"/>
    </isoform>
    <isoform>
        <id>Q07912-2</id>
        <name>2</name>
        <sequence type="described" ref="VSP_008655 VSP_008656"/>
    </isoform>
    <isoform>
        <id>Q07912-3</id>
        <name>3</name>
        <sequence type="described" ref="VSP_037284 VSP_037285 VSP_037286"/>
    </isoform>
</comment>
<comment type="tissue specificity">
    <text evidence="14 28 30">The Tyr-284 phosphorylated form shows a significant increase in expression in breast cancers during the progressive stages i.e. normal to hyperplasia (ADH), ductal carcinoma in situ (DCIS), invasive ductal carcinoma (IDC) and lymph node metastatic (LNMM) stages. It also shows a significant increase in expression in prostate cancers during the progressive stages.</text>
</comment>
<comment type="domain">
    <text evidence="1">The EBD (EGFR-binding domain) domain is necessary for interaction with EGFR.</text>
</comment>
<comment type="domain">
    <text evidence="31">The SAM-like domain is necessary for NEDD4-mediated ubiquitination. Promotes membrane localization and dimerization to allow for autophosphorylation.</text>
</comment>
<comment type="domain">
    <text evidence="31">The UBA domain binds both poly- and mono-ubiquitin.</text>
</comment>
<comment type="PTM">
    <text evidence="12 17 28 30 31 32 33">Autophosphorylation regulates kinase activity. Phosphorylation on Tyr-518 is required for interaction with SRC and is observed during association with clathrin-coated pits.</text>
</comment>
<comment type="PTM">
    <text evidence="1">Polyubiquitinated by NEDD4 and NEDD4L. Degradation can be induced by EGF and is lysosome-dependent (By similarity).</text>
</comment>
<comment type="miscellaneous">
    <molecule>Isoform 2</molecule>
    <text evidence="38">May be produced at very low levels due to a premature stop codon in the mRNA, leading to nonsense-mediated mRNA decay.</text>
</comment>
<comment type="similarity">
    <text evidence="3">Belongs to the protein kinase superfamily. Tyr protein kinase family.</text>
</comment>
<comment type="sequence caution" evidence="38">
    <conflict type="miscellaneous discrepancy">
        <sequence resource="EMBL-CDS" id="AAH08884"/>
    </conflict>
    <text>Unlikely isoform. Aberrant splice sites.</text>
</comment>
<comment type="sequence caution" evidence="38">
    <conflict type="erroneous initiation">
        <sequence resource="EMBL-CDS" id="BAD18675"/>
    </conflict>
    <text>Extended N-terminus.</text>
</comment>
<sequence length="1038" mass="114569">MQPEEGTGWLLELLSEVQLQQYFLRLRDDLNVTRLSHFEYVKNEDLEKIGMGRPGQRRLWEAVKRRKALCKRKSWMSKVFSGKRLEAEFPPHHSQSTFRKTSPAPGGPAGEGPLQSLTCLIGEKDLRLLEKLGDGSFGVVRRGEWDAPSGKTVSVAVKCLKPDVLSQPEAMDDFIREVNAMHSLDHRNLIRLYGVVLTPPMKMVTELAPLGSLLDRLRKHQGHFLLGTLSRYAVQVAEGMGYLESKRFIHRDLAARNLLLATRDLVKIGDFGLMRALPQNDDHYVMQEHRKVPFAWCAPESLKTRTFSHASDTWMFGVTLWEMFTYGQEPWIGLNGSQILHKIDKEGERLPRPEDCPQDIYNVMVQCWAHKPEDRPTFVALRDFLLEAQPTDMRALQDFEEPDKLHIQMNDVITVIEGRAENYWWRGQNTRTLCVGPFPRNVVTSVAGLSAQDISQPLQNSFIHTGHGDSDPRHCWGFPDRIDELYLGNPMDPPDLLSVELSTSRPPQHLGGVKKPTYDPVSEDQDPLSSDFKRLGLRKPGLPRGLWLAKPSARVPGTKASRGSGAEVTLIDFGEEPVVPALRPCAPSLAQLAMDACSLLDETPPQSPTRALPRPLHPTPVVDWDARPLPPPPAYDDVAQDEDDFEICSINSTLVGAGVPAGPSQGQTNYAFVPEQARPPPPLEDNLFLPPQGGGKPPSSAQTAEIFQALQQECMRQLQAPAGSPAPSPSPGGDDKPQVPPRVPIPPRPTRPHVQLSPAPPGEEETSQWPGPASPPRVPPREPLSPQGSRTPSPLVPPGSSPLPPRLSSSPGKTMPTTQSFASDPKYATPQVIQAPGPRAGPCILPIVRDGKKVSSTHYYLLPERPSYLERYQRFLREAQSPEEPTPLPVPLLLPPPSTPAPAAPTATVRPMPQAALDPKANFSTNNSNPGARPPPPRATARLPQRGCPGDGPEAGRPADKIQMAMVHGVTTEECQAALQCHGWSVQRAAQYLKVEQLFGLGLRPRGECHKVLEMFDWNLEQAGCHLLGSWGPAHHKR</sequence>
<organism>
    <name type="scientific">Homo sapiens</name>
    <name type="common">Human</name>
    <dbReference type="NCBI Taxonomy" id="9606"/>
    <lineage>
        <taxon>Eukaryota</taxon>
        <taxon>Metazoa</taxon>
        <taxon>Chordata</taxon>
        <taxon>Craniata</taxon>
        <taxon>Vertebrata</taxon>
        <taxon>Euteleostomi</taxon>
        <taxon>Mammalia</taxon>
        <taxon>Eutheria</taxon>
        <taxon>Euarchontoglires</taxon>
        <taxon>Primates</taxon>
        <taxon>Haplorrhini</taxon>
        <taxon>Catarrhini</taxon>
        <taxon>Hominidae</taxon>
        <taxon>Homo</taxon>
    </lineage>
</organism>
<dbReference type="EC" id="2.7.10.2" evidence="8 15 17 24 28"/>
<dbReference type="EC" id="2.7.11.1" evidence="15 24"/>
<dbReference type="EMBL" id="L13738">
    <property type="protein sequence ID" value="AAA53570.2"/>
    <property type="molecule type" value="mRNA"/>
</dbReference>
<dbReference type="EMBL" id="AK131539">
    <property type="protein sequence ID" value="BAD18675.1"/>
    <property type="status" value="ALT_INIT"/>
    <property type="molecule type" value="mRNA"/>
</dbReference>
<dbReference type="EMBL" id="AC124944">
    <property type="status" value="NOT_ANNOTATED_CDS"/>
    <property type="molecule type" value="Genomic_DNA"/>
</dbReference>
<dbReference type="EMBL" id="BC008884">
    <property type="protein sequence ID" value="AAH08884.1"/>
    <property type="status" value="ALT_SEQ"/>
    <property type="molecule type" value="mRNA"/>
</dbReference>
<dbReference type="EMBL" id="BC028164">
    <property type="protein sequence ID" value="AAH28164.1"/>
    <property type="molecule type" value="mRNA"/>
</dbReference>
<dbReference type="CCDS" id="CCDS33927.2">
    <molecule id="Q07912-3"/>
</dbReference>
<dbReference type="CCDS" id="CCDS33928.1">
    <molecule id="Q07912-1"/>
</dbReference>
<dbReference type="PIR" id="S33596">
    <property type="entry name" value="S33596"/>
</dbReference>
<dbReference type="RefSeq" id="NP_001010938.2">
    <molecule id="Q07912-3"/>
    <property type="nucleotide sequence ID" value="NM_001010938.2"/>
</dbReference>
<dbReference type="RefSeq" id="NP_001294975.1">
    <property type="nucleotide sequence ID" value="NM_001308046.1"/>
</dbReference>
<dbReference type="RefSeq" id="NP_001374642.1">
    <molecule id="Q07912-1"/>
    <property type="nucleotide sequence ID" value="NM_001387713.1"/>
</dbReference>
<dbReference type="RefSeq" id="NP_001374643.1">
    <molecule id="Q07912-1"/>
    <property type="nucleotide sequence ID" value="NM_001387714.1"/>
</dbReference>
<dbReference type="RefSeq" id="NP_005772.3">
    <molecule id="Q07912-1"/>
    <property type="nucleotide sequence ID" value="NM_005781.4"/>
</dbReference>
<dbReference type="RefSeq" id="XP_047303107.1">
    <molecule id="Q07912-1"/>
    <property type="nucleotide sequence ID" value="XM_047447151.1"/>
</dbReference>
<dbReference type="RefSeq" id="XP_047303116.1">
    <molecule id="Q07912-1"/>
    <property type="nucleotide sequence ID" value="XM_047447160.1"/>
</dbReference>
<dbReference type="RefSeq" id="XP_054200839.1">
    <molecule id="Q07912-1"/>
    <property type="nucleotide sequence ID" value="XM_054344864.1"/>
</dbReference>
<dbReference type="RefSeq" id="XP_054200851.1">
    <molecule id="Q07912-1"/>
    <property type="nucleotide sequence ID" value="XM_054344876.1"/>
</dbReference>
<dbReference type="PDB" id="1CF4">
    <property type="method" value="NMR"/>
    <property type="chains" value="B=448-489"/>
</dbReference>
<dbReference type="PDB" id="1U46">
    <property type="method" value="X-ray"/>
    <property type="resolution" value="2.00 A"/>
    <property type="chains" value="A/B=109-395"/>
</dbReference>
<dbReference type="PDB" id="1U4D">
    <property type="method" value="X-ray"/>
    <property type="resolution" value="2.10 A"/>
    <property type="chains" value="A/B=109-395"/>
</dbReference>
<dbReference type="PDB" id="1U54">
    <property type="method" value="X-ray"/>
    <property type="resolution" value="2.80 A"/>
    <property type="chains" value="A/B=109-395"/>
</dbReference>
<dbReference type="PDB" id="3EQP">
    <property type="method" value="X-ray"/>
    <property type="resolution" value="2.30 A"/>
    <property type="chains" value="A/B=117-392"/>
</dbReference>
<dbReference type="PDB" id="3EQR">
    <property type="method" value="X-ray"/>
    <property type="resolution" value="2.00 A"/>
    <property type="chains" value="A/B=117-392"/>
</dbReference>
<dbReference type="PDB" id="4EWH">
    <property type="method" value="X-ray"/>
    <property type="resolution" value="2.50 A"/>
    <property type="chains" value="A/B=117-391"/>
</dbReference>
<dbReference type="PDB" id="4HZR">
    <property type="method" value="X-ray"/>
    <property type="resolution" value="1.31 A"/>
    <property type="chains" value="A/B=115-389"/>
</dbReference>
<dbReference type="PDB" id="4HZS">
    <property type="method" value="X-ray"/>
    <property type="resolution" value="3.23 A"/>
    <property type="chains" value="A/B/C/D=115-453"/>
</dbReference>
<dbReference type="PDB" id="4ID7">
    <property type="method" value="X-ray"/>
    <property type="resolution" value="3.00 A"/>
    <property type="chains" value="A=117-389"/>
</dbReference>
<dbReference type="PDB" id="5ZXB">
    <property type="method" value="X-ray"/>
    <property type="resolution" value="2.20 A"/>
    <property type="chains" value="A/B=117-391"/>
</dbReference>
<dbReference type="PDB" id="6VQM">
    <property type="method" value="X-ray"/>
    <property type="resolution" value="2.87 A"/>
    <property type="chains" value="A/B=109-395"/>
</dbReference>
<dbReference type="PDB" id="7KP6">
    <property type="method" value="X-ray"/>
    <property type="resolution" value="1.79 A"/>
    <property type="chains" value="A/B=110-391"/>
</dbReference>
<dbReference type="PDB" id="8FE9">
    <property type="method" value="X-ray"/>
    <property type="resolution" value="3.20 A"/>
    <property type="chains" value="A=110-391"/>
</dbReference>
<dbReference type="PDB" id="8FZ3">
    <property type="method" value="X-ray"/>
    <property type="resolution" value="2.78 A"/>
    <property type="chains" value="A/B/C/D=958-1038"/>
</dbReference>
<dbReference type="PDB" id="8HMT">
    <property type="method" value="X-ray"/>
    <property type="resolution" value="3.17 A"/>
    <property type="chains" value="A/B/C/D=117-389"/>
</dbReference>
<dbReference type="PDB" id="8Q5P">
    <property type="method" value="X-ray"/>
    <property type="resolution" value="1.81 A"/>
    <property type="chains" value="B=508-519"/>
</dbReference>
<dbReference type="PDB" id="8THA">
    <property type="method" value="X-ray"/>
    <property type="resolution" value="1.68 A"/>
    <property type="chains" value="A=954-1038"/>
</dbReference>
<dbReference type="PDBsum" id="1CF4"/>
<dbReference type="PDBsum" id="1U46"/>
<dbReference type="PDBsum" id="1U4D"/>
<dbReference type="PDBsum" id="1U54"/>
<dbReference type="PDBsum" id="3EQP"/>
<dbReference type="PDBsum" id="3EQR"/>
<dbReference type="PDBsum" id="4EWH"/>
<dbReference type="PDBsum" id="4HZR"/>
<dbReference type="PDBsum" id="4HZS"/>
<dbReference type="PDBsum" id="4ID7"/>
<dbReference type="PDBsum" id="5ZXB"/>
<dbReference type="PDBsum" id="6VQM"/>
<dbReference type="PDBsum" id="7KP6"/>
<dbReference type="PDBsum" id="8FE9"/>
<dbReference type="PDBsum" id="8FZ3"/>
<dbReference type="PDBsum" id="8HMT"/>
<dbReference type="PDBsum" id="8Q5P"/>
<dbReference type="PDBsum" id="8THA"/>
<dbReference type="SMR" id="Q07912"/>
<dbReference type="BioGRID" id="115485">
    <property type="interactions" value="135"/>
</dbReference>
<dbReference type="CORUM" id="Q07912"/>
<dbReference type="DIP" id="DIP-33858N"/>
<dbReference type="FunCoup" id="Q07912">
    <property type="interactions" value="728"/>
</dbReference>
<dbReference type="IntAct" id="Q07912">
    <property type="interactions" value="71"/>
</dbReference>
<dbReference type="MINT" id="Q07912"/>
<dbReference type="STRING" id="9606.ENSP00000371341"/>
<dbReference type="BindingDB" id="Q07912"/>
<dbReference type="ChEMBL" id="CHEMBL4599"/>
<dbReference type="DrugBank" id="DB18236">
    <property type="generic name" value="(R)-9b"/>
</dbReference>
<dbReference type="DrugBank" id="DB00171">
    <property type="generic name" value="ATP"/>
</dbReference>
<dbReference type="DrugBank" id="DB04367">
    <property type="generic name" value="Debromohymenialdisine"/>
</dbReference>
<dbReference type="DrugBank" id="DB11986">
    <property type="generic name" value="Entrectinib"/>
</dbReference>
<dbReference type="DrugBank" id="DB12010">
    <property type="generic name" value="Fostamatinib"/>
</dbReference>
<dbReference type="DrugCentral" id="Q07912"/>
<dbReference type="GuidetoPHARMACOLOGY" id="2246"/>
<dbReference type="GlyCosmos" id="Q07912">
    <property type="glycosylation" value="2 sites, 1 glycan"/>
</dbReference>
<dbReference type="GlyGen" id="Q07912">
    <property type="glycosylation" value="6 sites, 1 O-linked glycan (5 sites)"/>
</dbReference>
<dbReference type="iPTMnet" id="Q07912"/>
<dbReference type="PhosphoSitePlus" id="Q07912"/>
<dbReference type="BioMuta" id="TNK2"/>
<dbReference type="DMDM" id="229462980"/>
<dbReference type="CPTAC" id="CPTAC-1779"/>
<dbReference type="CPTAC" id="CPTAC-2789"/>
<dbReference type="jPOST" id="Q07912"/>
<dbReference type="MassIVE" id="Q07912"/>
<dbReference type="PaxDb" id="9606-ENSP00000371341"/>
<dbReference type="PeptideAtlas" id="Q07912"/>
<dbReference type="ProteomicsDB" id="58556">
    <molecule id="Q07912-1"/>
</dbReference>
<dbReference type="ProteomicsDB" id="58557">
    <molecule id="Q07912-2"/>
</dbReference>
<dbReference type="ProteomicsDB" id="58558">
    <molecule id="Q07912-3"/>
</dbReference>
<dbReference type="Pumba" id="Q07912"/>
<dbReference type="Antibodypedia" id="4095">
    <property type="antibodies" value="763 antibodies from 40 providers"/>
</dbReference>
<dbReference type="CPTC" id="Q07912">
    <property type="antibodies" value="5 antibodies"/>
</dbReference>
<dbReference type="DNASU" id="10188"/>
<dbReference type="Ensembl" id="ENST00000333602.14">
    <molecule id="Q07912-1"/>
    <property type="protein sequence ID" value="ENSP00000329425.6"/>
    <property type="gene ID" value="ENSG00000061938.21"/>
</dbReference>
<dbReference type="Ensembl" id="ENST00000439230.6">
    <molecule id="Q07912-2"/>
    <property type="protein sequence ID" value="ENSP00000395588.1"/>
    <property type="gene ID" value="ENSG00000061938.21"/>
</dbReference>
<dbReference type="Ensembl" id="ENST00000671753.1">
    <molecule id="Q07912-3"/>
    <property type="protein sequence ID" value="ENSP00000499858.1"/>
    <property type="gene ID" value="ENSG00000061938.21"/>
</dbReference>
<dbReference type="GeneID" id="10188"/>
<dbReference type="KEGG" id="hsa:10188"/>
<dbReference type="UCSC" id="uc003fvt.2">
    <molecule id="Q07912-1"/>
    <property type="organism name" value="human"/>
</dbReference>
<dbReference type="AGR" id="HGNC:19297"/>
<dbReference type="CTD" id="10188"/>
<dbReference type="DisGeNET" id="10188"/>
<dbReference type="GeneCards" id="TNK2"/>
<dbReference type="HGNC" id="HGNC:19297">
    <property type="gene designation" value="TNK2"/>
</dbReference>
<dbReference type="HPA" id="ENSG00000061938">
    <property type="expression patterns" value="Low tissue specificity"/>
</dbReference>
<dbReference type="MalaCards" id="TNK2"/>
<dbReference type="MIM" id="606994">
    <property type="type" value="gene"/>
</dbReference>
<dbReference type="neXtProt" id="NX_Q07912"/>
<dbReference type="OpenTargets" id="ENSG00000061938"/>
<dbReference type="Orphanet" id="391316">
    <property type="disease" value="Infantile-onset mesial temporal lobe epilepsy with severe cognitive regression"/>
</dbReference>
<dbReference type="PharmGKB" id="PA134909759"/>
<dbReference type="VEuPathDB" id="HostDB:ENSG00000061938"/>
<dbReference type="eggNOG" id="KOG0199">
    <property type="taxonomic scope" value="Eukaryota"/>
</dbReference>
<dbReference type="GeneTree" id="ENSGT00940000160853"/>
<dbReference type="HOGENOM" id="CLU_000288_7_39_1"/>
<dbReference type="InParanoid" id="Q07912"/>
<dbReference type="OrthoDB" id="635774at2759"/>
<dbReference type="PAN-GO" id="Q07912">
    <property type="GO annotations" value="6 GO annotations based on evolutionary models"/>
</dbReference>
<dbReference type="PhylomeDB" id="Q07912"/>
<dbReference type="TreeFam" id="TF316643"/>
<dbReference type="BRENDA" id="2.7.10.2">
    <property type="organism ID" value="2681"/>
</dbReference>
<dbReference type="PathwayCommons" id="Q07912"/>
<dbReference type="Reactome" id="R-HSA-9842663">
    <property type="pathway name" value="Signaling by LTK"/>
</dbReference>
<dbReference type="SignaLink" id="Q07912"/>
<dbReference type="SIGNOR" id="Q07912"/>
<dbReference type="BioGRID-ORCS" id="10188">
    <property type="hits" value="11 hits in 1191 CRISPR screens"/>
</dbReference>
<dbReference type="ChiTaRS" id="TNK2">
    <property type="organism name" value="human"/>
</dbReference>
<dbReference type="EvolutionaryTrace" id="Q07912"/>
<dbReference type="GeneWiki" id="TNK2"/>
<dbReference type="GenomeRNAi" id="10188"/>
<dbReference type="Pharos" id="Q07912">
    <property type="development level" value="Tclin"/>
</dbReference>
<dbReference type="PRO" id="PR:Q07912"/>
<dbReference type="Proteomes" id="UP000005640">
    <property type="component" value="Chromosome 3"/>
</dbReference>
<dbReference type="RNAct" id="Q07912">
    <property type="molecule type" value="protein"/>
</dbReference>
<dbReference type="Bgee" id="ENSG00000061938">
    <property type="expression patterns" value="Expressed in right hemisphere of cerebellum and 192 other cell types or tissues"/>
</dbReference>
<dbReference type="ExpressionAtlas" id="Q07912">
    <property type="expression patterns" value="baseline and differential"/>
</dbReference>
<dbReference type="GO" id="GO:0005912">
    <property type="term" value="C:adherens junction"/>
    <property type="evidence" value="ECO:0007669"/>
    <property type="project" value="UniProtKB-SubCell"/>
</dbReference>
<dbReference type="GO" id="GO:0005905">
    <property type="term" value="C:clathrin-coated pit"/>
    <property type="evidence" value="ECO:0000314"/>
    <property type="project" value="UniProtKB"/>
</dbReference>
<dbReference type="GO" id="GO:0030136">
    <property type="term" value="C:clathrin-coated vesicle"/>
    <property type="evidence" value="ECO:0000314"/>
    <property type="project" value="UniProtKB"/>
</dbReference>
<dbReference type="GO" id="GO:0097268">
    <property type="term" value="C:cytoophidium"/>
    <property type="evidence" value="ECO:0000314"/>
    <property type="project" value="UniProtKB"/>
</dbReference>
<dbReference type="GO" id="GO:0005737">
    <property type="term" value="C:cytoplasm"/>
    <property type="evidence" value="ECO:0000314"/>
    <property type="project" value="UniProtKB"/>
</dbReference>
<dbReference type="GO" id="GO:0030659">
    <property type="term" value="C:cytoplasmic vesicle membrane"/>
    <property type="evidence" value="ECO:0007669"/>
    <property type="project" value="UniProtKB-SubCell"/>
</dbReference>
<dbReference type="GO" id="GO:0005829">
    <property type="term" value="C:cytosol"/>
    <property type="evidence" value="ECO:0000304"/>
    <property type="project" value="Reactome"/>
</dbReference>
<dbReference type="GO" id="GO:0005768">
    <property type="term" value="C:endosome"/>
    <property type="evidence" value="ECO:0000250"/>
    <property type="project" value="UniProtKB"/>
</dbReference>
<dbReference type="GO" id="GO:0070436">
    <property type="term" value="C:Grb2-EGFR complex"/>
    <property type="evidence" value="ECO:0000314"/>
    <property type="project" value="BHF-UCL"/>
</dbReference>
<dbReference type="GO" id="GO:0043231">
    <property type="term" value="C:intracellular membrane-bounded organelle"/>
    <property type="evidence" value="ECO:0000314"/>
    <property type="project" value="HPA"/>
</dbReference>
<dbReference type="GO" id="GO:0016020">
    <property type="term" value="C:membrane"/>
    <property type="evidence" value="ECO:0007005"/>
    <property type="project" value="UniProtKB"/>
</dbReference>
<dbReference type="GO" id="GO:0005634">
    <property type="term" value="C:nucleus"/>
    <property type="evidence" value="ECO:0000314"/>
    <property type="project" value="UniProtKB"/>
</dbReference>
<dbReference type="GO" id="GO:0048471">
    <property type="term" value="C:perinuclear region of cytoplasm"/>
    <property type="evidence" value="ECO:0007669"/>
    <property type="project" value="UniProtKB-SubCell"/>
</dbReference>
<dbReference type="GO" id="GO:0005886">
    <property type="term" value="C:plasma membrane"/>
    <property type="evidence" value="ECO:0000314"/>
    <property type="project" value="HPA"/>
</dbReference>
<dbReference type="GO" id="GO:0005524">
    <property type="term" value="F:ATP binding"/>
    <property type="evidence" value="ECO:0007669"/>
    <property type="project" value="UniProtKB-KW"/>
</dbReference>
<dbReference type="GO" id="GO:0005154">
    <property type="term" value="F:epidermal growth factor receptor binding"/>
    <property type="evidence" value="ECO:0000314"/>
    <property type="project" value="BHF-UCL"/>
</dbReference>
<dbReference type="GO" id="GO:0005095">
    <property type="term" value="F:GTPase inhibitor activity"/>
    <property type="evidence" value="ECO:0000304"/>
    <property type="project" value="ProtInc"/>
</dbReference>
<dbReference type="GO" id="GO:0042802">
    <property type="term" value="F:identical protein binding"/>
    <property type="evidence" value="ECO:0000353"/>
    <property type="project" value="IntAct"/>
</dbReference>
<dbReference type="GO" id="GO:0046872">
    <property type="term" value="F:metal ion binding"/>
    <property type="evidence" value="ECO:0007669"/>
    <property type="project" value="UniProtKB-KW"/>
</dbReference>
<dbReference type="GO" id="GO:0004715">
    <property type="term" value="F:non-membrane spanning protein tyrosine kinase activity"/>
    <property type="evidence" value="ECO:0000304"/>
    <property type="project" value="ProtInc"/>
</dbReference>
<dbReference type="GO" id="GO:0106310">
    <property type="term" value="F:protein serine kinase activity"/>
    <property type="evidence" value="ECO:0007669"/>
    <property type="project" value="RHEA"/>
</dbReference>
<dbReference type="GO" id="GO:0004674">
    <property type="term" value="F:protein serine/threonine kinase activity"/>
    <property type="evidence" value="ECO:0007669"/>
    <property type="project" value="UniProtKB-KW"/>
</dbReference>
<dbReference type="GO" id="GO:0004712">
    <property type="term" value="F:protein serine/threonine/tyrosine kinase activity"/>
    <property type="evidence" value="ECO:0000314"/>
    <property type="project" value="UniProtKB"/>
</dbReference>
<dbReference type="GO" id="GO:0004713">
    <property type="term" value="F:protein tyrosine kinase activity"/>
    <property type="evidence" value="ECO:0000314"/>
    <property type="project" value="UniProtKB"/>
</dbReference>
<dbReference type="GO" id="GO:0031625">
    <property type="term" value="F:ubiquitin protein ligase binding"/>
    <property type="evidence" value="ECO:0000353"/>
    <property type="project" value="UniProtKB"/>
</dbReference>
<dbReference type="GO" id="GO:0050699">
    <property type="term" value="F:WW domain binding"/>
    <property type="evidence" value="ECO:0000250"/>
    <property type="project" value="BHF-UCL"/>
</dbReference>
<dbReference type="GO" id="GO:0007166">
    <property type="term" value="P:cell surface receptor signaling pathway"/>
    <property type="evidence" value="ECO:0000304"/>
    <property type="project" value="UniProtKB"/>
</dbReference>
<dbReference type="GO" id="GO:0006897">
    <property type="term" value="P:endocytosis"/>
    <property type="evidence" value="ECO:0007669"/>
    <property type="project" value="UniProtKB-KW"/>
</dbReference>
<dbReference type="GO" id="GO:0016310">
    <property type="term" value="P:phosphorylation"/>
    <property type="evidence" value="ECO:0000314"/>
    <property type="project" value="UniProtKB"/>
</dbReference>
<dbReference type="GO" id="GO:0050731">
    <property type="term" value="P:positive regulation of peptidyl-tyrosine phosphorylation"/>
    <property type="evidence" value="ECO:0000314"/>
    <property type="project" value="UniProtKB"/>
</dbReference>
<dbReference type="GO" id="GO:2000369">
    <property type="term" value="P:regulation of clathrin-dependent endocytosis"/>
    <property type="evidence" value="ECO:0000314"/>
    <property type="project" value="UniProtKB"/>
</dbReference>
<dbReference type="GO" id="GO:0007264">
    <property type="term" value="P:small GTPase-mediated signal transduction"/>
    <property type="evidence" value="ECO:0000304"/>
    <property type="project" value="ProtInc"/>
</dbReference>
<dbReference type="CDD" id="cd05040">
    <property type="entry name" value="PTKc_Ack_like"/>
    <property type="match status" value="1"/>
</dbReference>
<dbReference type="CDD" id="cd09539">
    <property type="entry name" value="SAM_TNK-like"/>
    <property type="match status" value="1"/>
</dbReference>
<dbReference type="CDD" id="cd14274">
    <property type="entry name" value="UBA_ACK1"/>
    <property type="match status" value="1"/>
</dbReference>
<dbReference type="CDD" id="cd14328">
    <property type="entry name" value="UBA_TNK1"/>
    <property type="match status" value="1"/>
</dbReference>
<dbReference type="DisProt" id="DP01772"/>
<dbReference type="FunFam" id="4.10.680.10:FF:000001">
    <property type="entry name" value="activated CDC42 kinase 1 isoform X1"/>
    <property type="match status" value="1"/>
</dbReference>
<dbReference type="FunFam" id="1.10.510.10:FF:000080">
    <property type="entry name" value="Putative activated CDC42 kinase 1"/>
    <property type="match status" value="1"/>
</dbReference>
<dbReference type="FunFam" id="3.30.200.20:FF:000107">
    <property type="entry name" value="Putative activated CDC42 kinase 1"/>
    <property type="match status" value="1"/>
</dbReference>
<dbReference type="Gene3D" id="4.10.680.10">
    <property type="entry name" value="Cdc42-like binding domain"/>
    <property type="match status" value="1"/>
</dbReference>
<dbReference type="Gene3D" id="1.10.8.10">
    <property type="entry name" value="DNA helicase RuvA subunit, C-terminal domain"/>
    <property type="match status" value="1"/>
</dbReference>
<dbReference type="Gene3D" id="3.30.200.20">
    <property type="entry name" value="Phosphorylase Kinase, domain 1"/>
    <property type="match status" value="1"/>
</dbReference>
<dbReference type="Gene3D" id="1.10.510.10">
    <property type="entry name" value="Transferase(Phosphotransferase) domain 1"/>
    <property type="match status" value="1"/>
</dbReference>
<dbReference type="IDEAL" id="IID00276"/>
<dbReference type="InterPro" id="IPR055175">
    <property type="entry name" value="ACK/TNK-like_SAM"/>
</dbReference>
<dbReference type="InterPro" id="IPR030220">
    <property type="entry name" value="Ack1_UBA_dom"/>
</dbReference>
<dbReference type="InterPro" id="IPR015116">
    <property type="entry name" value="Cdc42-bd-like"/>
</dbReference>
<dbReference type="InterPro" id="IPR037085">
    <property type="entry name" value="Cdc42-bd-like_dom_sf"/>
</dbReference>
<dbReference type="InterPro" id="IPR052112">
    <property type="entry name" value="EGFR_SigReg_Kinase"/>
</dbReference>
<dbReference type="InterPro" id="IPR011009">
    <property type="entry name" value="Kinase-like_dom_sf"/>
</dbReference>
<dbReference type="InterPro" id="IPR021619">
    <property type="entry name" value="Mig-6"/>
</dbReference>
<dbReference type="InterPro" id="IPR000719">
    <property type="entry name" value="Prot_kinase_dom"/>
</dbReference>
<dbReference type="InterPro" id="IPR017441">
    <property type="entry name" value="Protein_kinase_ATP_BS"/>
</dbReference>
<dbReference type="InterPro" id="IPR001245">
    <property type="entry name" value="Ser-Thr/Tyr_kinase_cat_dom"/>
</dbReference>
<dbReference type="InterPro" id="IPR036028">
    <property type="entry name" value="SH3-like_dom_sf"/>
</dbReference>
<dbReference type="InterPro" id="IPR001452">
    <property type="entry name" value="SH3_domain"/>
</dbReference>
<dbReference type="InterPro" id="IPR049587">
    <property type="entry name" value="TNK-like_SAM"/>
</dbReference>
<dbReference type="InterPro" id="IPR008266">
    <property type="entry name" value="Tyr_kinase_AS"/>
</dbReference>
<dbReference type="InterPro" id="IPR020635">
    <property type="entry name" value="Tyr_kinase_cat_dom"/>
</dbReference>
<dbReference type="PANTHER" id="PTHR14254">
    <property type="entry name" value="GENE 33 POLYPEPTIDE"/>
    <property type="match status" value="1"/>
</dbReference>
<dbReference type="PANTHER" id="PTHR14254:SF6">
    <property type="entry name" value="NON-SPECIFIC PROTEIN-TYROSINE KINASE"/>
    <property type="match status" value="1"/>
</dbReference>
<dbReference type="Pfam" id="PF09027">
    <property type="entry name" value="GTPase_binding"/>
    <property type="match status" value="1"/>
</dbReference>
<dbReference type="Pfam" id="PF11555">
    <property type="entry name" value="Inhibitor_Mig-6"/>
    <property type="match status" value="1"/>
</dbReference>
<dbReference type="Pfam" id="PF07714">
    <property type="entry name" value="PK_Tyr_Ser-Thr"/>
    <property type="match status" value="1"/>
</dbReference>
<dbReference type="Pfam" id="PF22931">
    <property type="entry name" value="SAM_TNK"/>
    <property type="match status" value="1"/>
</dbReference>
<dbReference type="Pfam" id="PF14604">
    <property type="entry name" value="SH3_9"/>
    <property type="match status" value="1"/>
</dbReference>
<dbReference type="PRINTS" id="PR00109">
    <property type="entry name" value="TYRKINASE"/>
</dbReference>
<dbReference type="SMART" id="SM00326">
    <property type="entry name" value="SH3"/>
    <property type="match status" value="1"/>
</dbReference>
<dbReference type="SMART" id="SM00219">
    <property type="entry name" value="TyrKc"/>
    <property type="match status" value="1"/>
</dbReference>
<dbReference type="SUPFAM" id="SSF56112">
    <property type="entry name" value="Protein kinase-like (PK-like)"/>
    <property type="match status" value="1"/>
</dbReference>
<dbReference type="SUPFAM" id="SSF50044">
    <property type="entry name" value="SH3-domain"/>
    <property type="match status" value="1"/>
</dbReference>
<dbReference type="PROSITE" id="PS00107">
    <property type="entry name" value="PROTEIN_KINASE_ATP"/>
    <property type="match status" value="1"/>
</dbReference>
<dbReference type="PROSITE" id="PS50011">
    <property type="entry name" value="PROTEIN_KINASE_DOM"/>
    <property type="match status" value="1"/>
</dbReference>
<dbReference type="PROSITE" id="PS00109">
    <property type="entry name" value="PROTEIN_KINASE_TYR"/>
    <property type="match status" value="1"/>
</dbReference>
<dbReference type="PROSITE" id="PS50002">
    <property type="entry name" value="SH3"/>
    <property type="match status" value="1"/>
</dbReference>
<reference key="1">
    <citation type="journal article" date="1993" name="Nature">
        <title>A non-receptor tyrosine kinase that inhibits the GTPase activity of p21cdc42.</title>
        <authorList>
            <person name="Manser E."/>
            <person name="Leung T."/>
            <person name="Salihuddin H."/>
            <person name="Tan L."/>
            <person name="Lim L."/>
        </authorList>
    </citation>
    <scope>NUCLEOTIDE SEQUENCE [MRNA] (ISOFORM 1)</scope>
    <scope>INTERACTION WITH CDC42</scope>
    <source>
        <tissue>Hippocampus</tissue>
    </source>
</reference>
<reference key="2">
    <citation type="journal article" date="2004" name="Nat. Genet.">
        <title>Complete sequencing and characterization of 21,243 full-length human cDNAs.</title>
        <authorList>
            <person name="Ota T."/>
            <person name="Suzuki Y."/>
            <person name="Nishikawa T."/>
            <person name="Otsuki T."/>
            <person name="Sugiyama T."/>
            <person name="Irie R."/>
            <person name="Wakamatsu A."/>
            <person name="Hayashi K."/>
            <person name="Sato H."/>
            <person name="Nagai K."/>
            <person name="Kimura K."/>
            <person name="Makita H."/>
            <person name="Sekine M."/>
            <person name="Obayashi M."/>
            <person name="Nishi T."/>
            <person name="Shibahara T."/>
            <person name="Tanaka T."/>
            <person name="Ishii S."/>
            <person name="Yamamoto J."/>
            <person name="Saito K."/>
            <person name="Kawai Y."/>
            <person name="Isono Y."/>
            <person name="Nakamura Y."/>
            <person name="Nagahari K."/>
            <person name="Murakami K."/>
            <person name="Yasuda T."/>
            <person name="Iwayanagi T."/>
            <person name="Wagatsuma M."/>
            <person name="Shiratori A."/>
            <person name="Sudo H."/>
            <person name="Hosoiri T."/>
            <person name="Kaku Y."/>
            <person name="Kodaira H."/>
            <person name="Kondo H."/>
            <person name="Sugawara M."/>
            <person name="Takahashi M."/>
            <person name="Kanda K."/>
            <person name="Yokoi T."/>
            <person name="Furuya T."/>
            <person name="Kikkawa E."/>
            <person name="Omura Y."/>
            <person name="Abe K."/>
            <person name="Kamihara K."/>
            <person name="Katsuta N."/>
            <person name="Sato K."/>
            <person name="Tanikawa M."/>
            <person name="Yamazaki M."/>
            <person name="Ninomiya K."/>
            <person name="Ishibashi T."/>
            <person name="Yamashita H."/>
            <person name="Murakawa K."/>
            <person name="Fujimori K."/>
            <person name="Tanai H."/>
            <person name="Kimata M."/>
            <person name="Watanabe M."/>
            <person name="Hiraoka S."/>
            <person name="Chiba Y."/>
            <person name="Ishida S."/>
            <person name="Ono Y."/>
            <person name="Takiguchi S."/>
            <person name="Watanabe S."/>
            <person name="Yosida M."/>
            <person name="Hotuta T."/>
            <person name="Kusano J."/>
            <person name="Kanehori K."/>
            <person name="Takahashi-Fujii A."/>
            <person name="Hara H."/>
            <person name="Tanase T.-O."/>
            <person name="Nomura Y."/>
            <person name="Togiya S."/>
            <person name="Komai F."/>
            <person name="Hara R."/>
            <person name="Takeuchi K."/>
            <person name="Arita M."/>
            <person name="Imose N."/>
            <person name="Musashino K."/>
            <person name="Yuuki H."/>
            <person name="Oshima A."/>
            <person name="Sasaki N."/>
            <person name="Aotsuka S."/>
            <person name="Yoshikawa Y."/>
            <person name="Matsunawa H."/>
            <person name="Ichihara T."/>
            <person name="Shiohata N."/>
            <person name="Sano S."/>
            <person name="Moriya S."/>
            <person name="Momiyama H."/>
            <person name="Satoh N."/>
            <person name="Takami S."/>
            <person name="Terashima Y."/>
            <person name="Suzuki O."/>
            <person name="Nakagawa S."/>
            <person name="Senoh A."/>
            <person name="Mizoguchi H."/>
            <person name="Goto Y."/>
            <person name="Shimizu F."/>
            <person name="Wakebe H."/>
            <person name="Hishigaki H."/>
            <person name="Watanabe T."/>
            <person name="Sugiyama A."/>
            <person name="Takemoto M."/>
            <person name="Kawakami B."/>
            <person name="Yamazaki M."/>
            <person name="Watanabe K."/>
            <person name="Kumagai A."/>
            <person name="Itakura S."/>
            <person name="Fukuzumi Y."/>
            <person name="Fujimori Y."/>
            <person name="Komiyama M."/>
            <person name="Tashiro H."/>
            <person name="Tanigami A."/>
            <person name="Fujiwara T."/>
            <person name="Ono T."/>
            <person name="Yamada K."/>
            <person name="Fujii Y."/>
            <person name="Ozaki K."/>
            <person name="Hirao M."/>
            <person name="Ohmori Y."/>
            <person name="Kawabata A."/>
            <person name="Hikiji T."/>
            <person name="Kobatake N."/>
            <person name="Inagaki H."/>
            <person name="Ikema Y."/>
            <person name="Okamoto S."/>
            <person name="Okitani R."/>
            <person name="Kawakami T."/>
            <person name="Noguchi S."/>
            <person name="Itoh T."/>
            <person name="Shigeta K."/>
            <person name="Senba T."/>
            <person name="Matsumura K."/>
            <person name="Nakajima Y."/>
            <person name="Mizuno T."/>
            <person name="Morinaga M."/>
            <person name="Sasaki M."/>
            <person name="Togashi T."/>
            <person name="Oyama M."/>
            <person name="Hata H."/>
            <person name="Watanabe M."/>
            <person name="Komatsu T."/>
            <person name="Mizushima-Sugano J."/>
            <person name="Satoh T."/>
            <person name="Shirai Y."/>
            <person name="Takahashi Y."/>
            <person name="Nakagawa K."/>
            <person name="Okumura K."/>
            <person name="Nagase T."/>
            <person name="Nomura N."/>
            <person name="Kikuchi H."/>
            <person name="Masuho Y."/>
            <person name="Yamashita R."/>
            <person name="Nakai K."/>
            <person name="Yada T."/>
            <person name="Nakamura Y."/>
            <person name="Ohara O."/>
            <person name="Isogai T."/>
            <person name="Sugano S."/>
        </authorList>
    </citation>
    <scope>NUCLEOTIDE SEQUENCE [LARGE SCALE MRNA] (ISOFORM 3)</scope>
    <scope>VARIANT LEU-725</scope>
    <source>
        <tissue>Brain</tissue>
    </source>
</reference>
<reference key="3">
    <citation type="journal article" date="2006" name="Nature">
        <title>The DNA sequence, annotation and analysis of human chromosome 3.</title>
        <authorList>
            <person name="Muzny D.M."/>
            <person name="Scherer S.E."/>
            <person name="Kaul R."/>
            <person name="Wang J."/>
            <person name="Yu J."/>
            <person name="Sudbrak R."/>
            <person name="Buhay C.J."/>
            <person name="Chen R."/>
            <person name="Cree A."/>
            <person name="Ding Y."/>
            <person name="Dugan-Rocha S."/>
            <person name="Gill R."/>
            <person name="Gunaratne P."/>
            <person name="Harris R.A."/>
            <person name="Hawes A.C."/>
            <person name="Hernandez J."/>
            <person name="Hodgson A.V."/>
            <person name="Hume J."/>
            <person name="Jackson A."/>
            <person name="Khan Z.M."/>
            <person name="Kovar-Smith C."/>
            <person name="Lewis L.R."/>
            <person name="Lozado R.J."/>
            <person name="Metzker M.L."/>
            <person name="Milosavljevic A."/>
            <person name="Miner G.R."/>
            <person name="Morgan M.B."/>
            <person name="Nazareth L.V."/>
            <person name="Scott G."/>
            <person name="Sodergren E."/>
            <person name="Song X.-Z."/>
            <person name="Steffen D."/>
            <person name="Wei S."/>
            <person name="Wheeler D.A."/>
            <person name="Wright M.W."/>
            <person name="Worley K.C."/>
            <person name="Yuan Y."/>
            <person name="Zhang Z."/>
            <person name="Adams C.Q."/>
            <person name="Ansari-Lari M.A."/>
            <person name="Ayele M."/>
            <person name="Brown M.J."/>
            <person name="Chen G."/>
            <person name="Chen Z."/>
            <person name="Clendenning J."/>
            <person name="Clerc-Blankenburg K.P."/>
            <person name="Chen R."/>
            <person name="Chen Z."/>
            <person name="Davis C."/>
            <person name="Delgado O."/>
            <person name="Dinh H.H."/>
            <person name="Dong W."/>
            <person name="Draper H."/>
            <person name="Ernst S."/>
            <person name="Fu G."/>
            <person name="Gonzalez-Garay M.L."/>
            <person name="Garcia D.K."/>
            <person name="Gillett W."/>
            <person name="Gu J."/>
            <person name="Hao B."/>
            <person name="Haugen E."/>
            <person name="Havlak P."/>
            <person name="He X."/>
            <person name="Hennig S."/>
            <person name="Hu S."/>
            <person name="Huang W."/>
            <person name="Jackson L.R."/>
            <person name="Jacob L.S."/>
            <person name="Kelly S.H."/>
            <person name="Kube M."/>
            <person name="Levy R."/>
            <person name="Li Z."/>
            <person name="Liu B."/>
            <person name="Liu J."/>
            <person name="Liu W."/>
            <person name="Lu J."/>
            <person name="Maheshwari M."/>
            <person name="Nguyen B.-V."/>
            <person name="Okwuonu G.O."/>
            <person name="Palmeiri A."/>
            <person name="Pasternak S."/>
            <person name="Perez L.M."/>
            <person name="Phelps K.A."/>
            <person name="Plopper F.J."/>
            <person name="Qiang B."/>
            <person name="Raymond C."/>
            <person name="Rodriguez R."/>
            <person name="Saenphimmachak C."/>
            <person name="Santibanez J."/>
            <person name="Shen H."/>
            <person name="Shen Y."/>
            <person name="Subramanian S."/>
            <person name="Tabor P.E."/>
            <person name="Verduzco D."/>
            <person name="Waldron L."/>
            <person name="Wang J."/>
            <person name="Wang J."/>
            <person name="Wang Q."/>
            <person name="Williams G.A."/>
            <person name="Wong G.K.-S."/>
            <person name="Yao Z."/>
            <person name="Zhang J."/>
            <person name="Zhang X."/>
            <person name="Zhao G."/>
            <person name="Zhou J."/>
            <person name="Zhou Y."/>
            <person name="Nelson D."/>
            <person name="Lehrach H."/>
            <person name="Reinhardt R."/>
            <person name="Naylor S.L."/>
            <person name="Yang H."/>
            <person name="Olson M."/>
            <person name="Weinstock G."/>
            <person name="Gibbs R.A."/>
        </authorList>
    </citation>
    <scope>NUCLEOTIDE SEQUENCE [LARGE SCALE GENOMIC DNA]</scope>
</reference>
<reference key="4">
    <citation type="journal article" date="2004" name="Genome Res.">
        <title>The status, quality, and expansion of the NIH full-length cDNA project: the Mammalian Gene Collection (MGC).</title>
        <authorList>
            <consortium name="The MGC Project Team"/>
        </authorList>
    </citation>
    <scope>NUCLEOTIDE SEQUENCE [LARGE SCALE MRNA] (ISOFORM 2)</scope>
    <source>
        <tissue>Brain</tissue>
        <tissue>Uterus</tissue>
    </source>
</reference>
<reference key="5">
    <citation type="journal article" date="1999" name="Nat. Cell Biol.">
        <title>Melanoma chondroitin sulphate proteoglycan regulates cell spreading through Cdc42, Ack-1 and p130cas.</title>
        <authorList>
            <person name="Eisenmann K.M."/>
            <person name="McCarthy J.B."/>
            <person name="Simpson M.A."/>
            <person name="Keely P.J."/>
            <person name="Guan J.-L."/>
            <person name="Tachibana K."/>
            <person name="Lim L."/>
            <person name="Manser E."/>
            <person name="Furcht L.T."/>
            <person name="Iida J."/>
        </authorList>
    </citation>
    <scope>INTERACTION WITH CSPG4</scope>
</reference>
<reference key="6">
    <citation type="journal article" date="2000" name="Biochem. Biophys. Res. Commun.">
        <title>Activation of the guanine nucleotide exchange factor Dbl following ACK1-dependent tyrosine phosphorylation.</title>
        <authorList>
            <person name="Kato J."/>
            <person name="Kaziro Y."/>
            <person name="Satoh T."/>
        </authorList>
    </citation>
    <scope>FUNCTION AS MCF2 KINASE</scope>
    <scope>CATALYTIC ACTIVITY</scope>
    <scope>COFACTOR</scope>
</reference>
<reference key="7">
    <citation type="journal article" date="2001" name="J. Biol. Chem.">
        <title>The tyrosine kinase ACK1 associates with clathrin-coated vesicles through a binding motif shared by arrestin and other adaptors.</title>
        <authorList>
            <person name="Teo M."/>
            <person name="Tan L."/>
            <person name="Lim L."/>
            <person name="Manser E."/>
        </authorList>
    </citation>
    <scope>FUNCTION</scope>
</reference>
<reference key="8">
    <citation type="journal article" date="2004" name="Biochem. Biophys. Res. Commun.">
        <title>Cdc42-dependent nuclear translocation of non-receptor tyrosine kinase, ACK.</title>
        <authorList>
            <person name="Ahmed I."/>
            <person name="Calle Y."/>
            <person name="Sayed M.A."/>
            <person name="Kamal J.M."/>
            <person name="Rengaswamy P."/>
            <person name="Manser E."/>
            <person name="Meiners S."/>
            <person name="Nur-E-Kamal A."/>
        </authorList>
    </citation>
    <scope>SUBCELLULAR LOCATION</scope>
</reference>
<reference key="9">
    <citation type="journal article" date="2005" name="Cancer Res.">
        <title>Activated tyrosine kinase Ack1 promotes prostate tumorigenesis: role of Ack1 in polyubiquitination of tumor suppressor Wwox.</title>
        <authorList>
            <person name="Mahajan N.P."/>
            <person name="Whang Y.E."/>
            <person name="Mohler J.L."/>
            <person name="Earp H.S."/>
        </authorList>
    </citation>
    <scope>AUTOPHOSPHORYLATION</scope>
    <scope>INTERACTION WITH HSP90AB1; MTERK AND WWOX</scope>
    <scope>MUTAGENESIS OF LYS-158 AND LEU-487</scope>
</reference>
<reference key="10">
    <citation type="journal article" date="2005" name="FEBS Lett.">
        <title>SNX9 as an adaptor for linking synaptojanin-1 to the Cdc42 effector ACK1.</title>
        <authorList>
            <person name="Yeow-Fong L."/>
            <person name="Lim L."/>
            <person name="Manser E."/>
        </authorList>
    </citation>
    <scope>INTERACTION WITH SNX9</scope>
    <scope>SUBCELLULAR LOCATION</scope>
</reference>
<reference key="11">
    <citation type="journal article" date="2005" name="J. Biol. Chem.">
        <title>Phosphorylation of WASP by the Cdc42-associated kinase ACK1: dual hydroxyamino acid specificity in a tyrosine kinase.</title>
        <authorList>
            <person name="Yokoyama N."/>
            <person name="Lougheed J."/>
            <person name="Miller W.T."/>
        </authorList>
    </citation>
    <scope>FUNCTION AS WAS KINASE</scope>
    <scope>INTERACTION WITH WASL</scope>
    <scope>CATALYTIC ACTIVITY</scope>
    <scope>COFACTOR</scope>
</reference>
<reference key="12">
    <citation type="journal article" date="2005" name="Nat. Biotechnol.">
        <title>Immunoaffinity profiling of tyrosine phosphorylation in cancer cells.</title>
        <authorList>
            <person name="Rush J."/>
            <person name="Moritz A."/>
            <person name="Lee K.A."/>
            <person name="Guo A."/>
            <person name="Goss V.L."/>
            <person name="Spek E.J."/>
            <person name="Zhang H."/>
            <person name="Zha X.-M."/>
            <person name="Polakiewicz R.D."/>
            <person name="Comb M.J."/>
        </authorList>
    </citation>
    <scope>IDENTIFICATION BY MASS SPECTROMETRY [LARGE SCALE ANALYSIS]</scope>
</reference>
<reference key="13">
    <citation type="journal article" date="2005" name="Proc. Natl. Acad. Sci. U.S.A.">
        <title>Metastatic properties and genomic amplification of the tyrosine kinase gene ACK1.</title>
        <authorList>
            <person name="van der Horst E.H."/>
            <person name="Degenhardt Y.Y."/>
            <person name="Strelow A."/>
            <person name="Slavin A."/>
            <person name="Chinn L."/>
            <person name="Orf J."/>
            <person name="Rong M."/>
            <person name="Li S."/>
            <person name="See L.-H."/>
            <person name="Nguyen K.Q.C."/>
            <person name="Hoey T."/>
            <person name="Wesche H."/>
            <person name="Powers S."/>
        </authorList>
    </citation>
    <scope>FUNCTION</scope>
    <scope>TISSUE SPECIFICITY</scope>
</reference>
<reference key="14">
    <citation type="journal article" date="2006" name="Cell">
        <title>Global, in vivo, and site-specific phosphorylation dynamics in signaling networks.</title>
        <authorList>
            <person name="Olsen J.V."/>
            <person name="Blagoev B."/>
            <person name="Gnad F."/>
            <person name="Macek B."/>
            <person name="Kumar C."/>
            <person name="Mortensen P."/>
            <person name="Mann M."/>
        </authorList>
    </citation>
    <scope>IDENTIFICATION BY MASS SPECTROMETRY [LARGE SCALE ANALYSIS]</scope>
    <source>
        <tissue>Cervix carcinoma</tissue>
    </source>
</reference>
<reference key="15">
    <citation type="journal article" date="2006" name="J. Biol. Chem.">
        <title>Ack1 mediates Cdc42-dependent cell migration and signaling to p130Cas.</title>
        <authorList>
            <person name="Modzelewska K."/>
            <person name="Newman L.P."/>
            <person name="Desai R."/>
            <person name="Keely P.J."/>
        </authorList>
    </citation>
    <scope>FUNCTION IN CELL MIGRATION</scope>
    <scope>INTERACTION WITH BCAR1; CDC42 AND CRK</scope>
</reference>
<reference key="16">
    <citation type="journal article" date="2006" name="Methods Enzymol.">
        <title>Purification and enzyme activity of ACK1.</title>
        <authorList>
            <person name="Yokoyama N."/>
            <person name="Miller W.T."/>
        </authorList>
    </citation>
    <scope>FUNCTION</scope>
    <scope>CATALYTIC ACTIVITY</scope>
    <scope>PHOSPHORYLATION AT TYR-284</scope>
</reference>
<reference key="17">
    <citation type="journal article" date="2007" name="Proc. Natl. Acad. Sci. U.S.A.">
        <title>Activated Cdc42-associated kinase Ack1 promotes prostate cancer progression via androgen receptor tyrosine phosphorylation.</title>
        <authorList>
            <person name="Mahajan N.P."/>
            <person name="Liu Y."/>
            <person name="Majumder S."/>
            <person name="Warren M.R."/>
            <person name="Parker C.E."/>
            <person name="Mohler J.L."/>
            <person name="Earp H.S."/>
            <person name="Whang Y.E."/>
        </authorList>
    </citation>
    <scope>INTERACTION WITH AR</scope>
</reference>
<reference key="18">
    <citation type="journal article" date="2008" name="Biochem. Biophys. Res. Commun.">
        <title>Nephrocystin-1 interacts directly with Ack1 and is expressed in human collecting duct.</title>
        <authorList>
            <person name="Eley L."/>
            <person name="Moochhala S.H."/>
            <person name="Simms R."/>
            <person name="Hildebrandt F."/>
            <person name="Sayer J.A."/>
        </authorList>
    </citation>
    <scope>INTERACTION WITH NPHP1</scope>
</reference>
<reference key="19">
    <citation type="journal article" date="2008" name="Breast Cancer Res.">
        <title>TNK2 preserves epidermal growth factor receptor expression on the cell surface and enhances migration and invasion of human breast cancer cells.</title>
        <authorList>
            <person name="Howlin J."/>
            <person name="Rosenkvist J."/>
            <person name="Andersson T."/>
        </authorList>
    </citation>
    <scope>FUNCTION</scope>
</reference>
<reference key="20">
    <citation type="journal article" date="2008" name="Exp. Cell Res.">
        <title>Dysregulation of Ack1 inhibits down-regulation of the EGF receptor.</title>
        <authorList>
            <person name="Groevdal L.M."/>
            <person name="Johannessen L.E."/>
            <person name="Roedland M.S."/>
            <person name="Madshus I.H."/>
            <person name="Stang E."/>
        </authorList>
    </citation>
    <scope>FUNCTION</scope>
    <scope>SUBCELLULAR LOCATION</scope>
</reference>
<reference key="21">
    <citation type="journal article" date="2008" name="Mol. Cell">
        <title>Kinase-selective enrichment enables quantitative phosphoproteomics of the kinome across the cell cycle.</title>
        <authorList>
            <person name="Daub H."/>
            <person name="Olsen J.V."/>
            <person name="Bairlein M."/>
            <person name="Gnad F."/>
            <person name="Oppermann F.S."/>
            <person name="Korner R."/>
            <person name="Greff Z."/>
            <person name="Keri G."/>
            <person name="Stemmann O."/>
            <person name="Mann M."/>
        </authorList>
    </citation>
    <scope>PHOSPHORYLATION [LARGE SCALE ANALYSIS] AT SER-881</scope>
    <scope>IDENTIFICATION BY MASS SPECTROMETRY [LARGE SCALE ANALYSIS]</scope>
    <source>
        <tissue>Cervix carcinoma</tissue>
    </source>
</reference>
<reference key="22">
    <citation type="journal article" date="2008" name="Proc. Natl. Acad. Sci. U.S.A.">
        <title>A quantitative atlas of mitotic phosphorylation.</title>
        <authorList>
            <person name="Dephoure N."/>
            <person name="Zhou C."/>
            <person name="Villen J."/>
            <person name="Beausoleil S.A."/>
            <person name="Bakalarski C.E."/>
            <person name="Elledge S.J."/>
            <person name="Gygi S.P."/>
        </authorList>
    </citation>
    <scope>IDENTIFICATION BY MASS SPECTROMETRY [LARGE SCALE ANALYSIS]</scope>
    <source>
        <tissue>Cervix carcinoma</tissue>
    </source>
</reference>
<reference key="23">
    <citation type="journal article" date="2009" name="J. Biol. Chem.">
        <title>Down-regulation of active ACK1 is mediated by association with the E3 ubiquitin ligase Nedd4-2.</title>
        <authorList>
            <person name="Chan W."/>
            <person name="Tian R."/>
            <person name="Lee Y.-F."/>
            <person name="Sit S.T."/>
            <person name="Lim L."/>
            <person name="Manser E."/>
        </authorList>
    </citation>
    <scope>INTERACTION WITH NEDD4</scope>
    <scope>UBIQUITINATION</scope>
</reference>
<reference key="24">
    <citation type="journal article" date="2009" name="J. Biol. Chem.">
        <title>Cytoplasmic ACK1 interaction with multiple receptor tyrosine kinases is mediated by Grb2: an analysis of ACK1 effects on Axl signaling.</title>
        <authorList>
            <person name="Pao-Chun L."/>
            <person name="Chan P.M."/>
            <person name="Chan W."/>
            <person name="Manser E."/>
        </authorList>
    </citation>
    <scope>FUNCTION</scope>
    <scope>INTERACTION WITH AXL; LTK; PDGFRL AND GRB2</scope>
</reference>
<reference key="25">
    <citation type="journal article" date="2009" name="Mol. Cell. Proteomics">
        <title>Large-scale proteomics analysis of the human kinome.</title>
        <authorList>
            <person name="Oppermann F.S."/>
            <person name="Gnad F."/>
            <person name="Olsen J.V."/>
            <person name="Hornberger R."/>
            <person name="Greff Z."/>
            <person name="Keri G."/>
            <person name="Mann M."/>
            <person name="Daub H."/>
        </authorList>
    </citation>
    <scope>PHOSPHORYLATION [LARGE SCALE ANALYSIS] AT TYR-284 AND SER-724</scope>
    <scope>IDENTIFICATION BY MASS SPECTROMETRY [LARGE SCALE ANALYSIS]</scope>
</reference>
<reference key="26">
    <citation type="journal article" date="2010" name="BMC Biochem.">
        <title>Regulation of Ack1 localization and activity by the amino-terminal SAM domain.</title>
        <authorList>
            <person name="Prieto-Echaguee V."/>
            <person name="Gucwa A."/>
            <person name="Brown D.A."/>
            <person name="Miller W.T."/>
        </authorList>
    </citation>
    <scope>SUBUNIT</scope>
    <scope>SUBCELLULAR LOCATION</scope>
    <scope>PHOSPHORYLATION AT TYR-284</scope>
    <scope>DOMAIN SAM-LIKE</scope>
</reference>
<reference key="27">
    <citation type="journal article" date="2010" name="J. Biol. Chem.">
        <title>Cancer-associated mutations activate the nonreceptor tyrosine kinase Ack1.</title>
        <authorList>
            <person name="Prieto-Echaguee V."/>
            <person name="Gucwa A."/>
            <person name="Craddock B.P."/>
            <person name="Brown D.A."/>
            <person name="Miller W.T."/>
        </authorList>
    </citation>
    <scope>FUNCTION</scope>
    <scope>SUBCELLULAR LOCATION</scope>
    <scope>VARIANTS LEU-34; GLN-99; LYS-346 AND ILE-409</scope>
    <scope>CHARACTERIZATION OF VARIANTS LEU-34; GLN-99; LYS-346 AND ILE-409</scope>
    <scope>MUTAGENESIS OF LEU-120; LEU-197 AND VAL-365</scope>
</reference>
<reference key="28">
    <citation type="journal article" date="2010" name="Oncogene">
        <title>Dasatinib inhibits site-specific tyrosine phosphorylation of androgen receptor by Ack1 and Src kinases.</title>
        <authorList>
            <person name="Liu Y."/>
            <person name="Karaca M."/>
            <person name="Zhang Z."/>
            <person name="Gioeli D."/>
            <person name="Earp H.S."/>
            <person name="Whang Y.E."/>
        </authorList>
    </citation>
    <scope>FUNCTION AS AR KINASE</scope>
    <scope>ACTIVITY REGULATION</scope>
</reference>
<reference key="29">
    <citation type="journal article" date="2010" name="PLoS ONE">
        <title>Ack1 mediated AKT/PKB tyrosine 176 phosphorylation regulates its activation.</title>
        <authorList>
            <person name="Mahajan K."/>
            <person name="Coppola D."/>
            <person name="Challa S."/>
            <person name="Fang B."/>
            <person name="Chen Y.A."/>
            <person name="Zhu W."/>
            <person name="Lopez A.S."/>
            <person name="Koomen J."/>
            <person name="Engelman R.W."/>
            <person name="Rivera C."/>
            <person name="Muraoka-Cook R.S."/>
            <person name="Cheng J.Q."/>
            <person name="Schoenbrunn E."/>
            <person name="Sebti S.M."/>
            <person name="Earp H.S."/>
            <person name="Mahajan N.P."/>
        </authorList>
    </citation>
    <scope>FUNCTION</scope>
    <scope>CATALYTIC ACTIVITY</scope>
    <scope>COFACTOR</scope>
    <scope>INTERACTION WITH AKT1</scope>
    <scope>SUBCELLULAR LOCATION</scope>
    <scope>CHARACTERIZATION OF VARIANT LYS-346</scope>
    <scope>PHOSPHORYLATION AT TYR-284</scope>
    <scope>TISSUE SPECIFICITY</scope>
</reference>
<reference key="30">
    <citation type="journal article" date="2010" name="Prostate">
        <title>Effect of Ack1 tyrosine kinase inhibitor on ligand-independent androgen receptor activity.</title>
        <authorList>
            <person name="Mahajan K."/>
            <person name="Challa S."/>
            <person name="Coppola D."/>
            <person name="Lawrence H."/>
            <person name="Luo Y."/>
            <person name="Gevariya H."/>
            <person name="Zhu W."/>
            <person name="Chen Y.A."/>
            <person name="Lawrence N.J."/>
            <person name="Mahajan N.P."/>
        </authorList>
    </citation>
    <scope>PHOSPHORYLATION AT TYR-284</scope>
    <scope>TISSUE SPECIFICITY</scope>
    <scope>ACTIVITY REGULATION</scope>
</reference>
<reference key="31">
    <citation type="journal article" date="2011" name="Biochem. J.">
        <title>The Cdc42-associated kinase ACK1 is not auto-inhibited but requires Src for activation.</title>
        <authorList>
            <person name="Chan W."/>
            <person name="Sit S.T."/>
            <person name="Manser E."/>
        </authorList>
    </citation>
    <scope>PHOSPHORYLATION AT TYR-284</scope>
    <scope>INTERACTION WITH SRC</scope>
</reference>
<reference key="32">
    <citation type="journal article" date="2011" name="Mol. Biol. Cell">
        <title>Constitutive activated Cdc42-associated kinase (Ack) phosphorylation at arrested endocytic clathrin-coated pits of cells that lack dynamin.</title>
        <authorList>
            <person name="Shen H."/>
            <person name="Ferguson S.M."/>
            <person name="Dephoure N."/>
            <person name="Park R."/>
            <person name="Yang Y."/>
            <person name="Volpicelli-Daley L."/>
            <person name="Gygi S."/>
            <person name="Schlessinger J."/>
            <person name="De Camilli P."/>
        </authorList>
    </citation>
    <scope>SUBCELLULAR LOCATION</scope>
    <scope>PHOSPHORYLATION AT TYR-284; TYR-518; TYR-827; TYR-859 AND TYR-872</scope>
</reference>
<reference key="33">
    <citation type="journal article" date="2010" name="J. Cell. Physiol.">
        <title>Shepherding AKT and androgen receptor by Ack1 tyrosine kinase.</title>
        <authorList>
            <person name="Mahajan K."/>
            <person name="Mahajan N.P."/>
        </authorList>
    </citation>
    <scope>REVIEW ON TUMOR GROWTH</scope>
</reference>
<reference key="34">
    <citation type="journal article" date="2013" name="J. Proteome Res.">
        <title>Toward a comprehensive characterization of a human cancer cell phosphoproteome.</title>
        <authorList>
            <person name="Zhou H."/>
            <person name="Di Palma S."/>
            <person name="Preisinger C."/>
            <person name="Peng M."/>
            <person name="Polat A.N."/>
            <person name="Heck A.J."/>
            <person name="Mohammed S."/>
        </authorList>
    </citation>
    <scope>IDENTIFICATION BY MASS SPECTROMETRY [LARGE SCALE ANALYSIS]</scope>
    <source>
        <tissue>Cervix carcinoma</tissue>
        <tissue>Erythroleukemia</tissue>
    </source>
</reference>
<reference key="35">
    <citation type="journal article" date="1999" name="Nature">
        <title>Structure of the small G protein Cdc42 bound to the GTPase-binding domain of ACK.</title>
        <authorList>
            <person name="Mott H.R."/>
            <person name="Owen D."/>
            <person name="Nietlispach D."/>
            <person name="Lowe P.N."/>
            <person name="Manser E."/>
            <person name="Lim L."/>
            <person name="Laue E.D."/>
        </authorList>
    </citation>
    <scope>STRUCTURE BY NMR OF 448-489</scope>
</reference>
<reference key="36">
    <citation type="journal article" date="2004" name="J. Biol. Chem.">
        <title>Crystal structures of the phosphorylated and unphosphorylated kinase domains of the Cdc42-associated tyrosine kinase ACK1.</title>
        <authorList>
            <person name="Lougheed J.C."/>
            <person name="Chen R.-H."/>
            <person name="Mak P."/>
            <person name="Stout T.J."/>
        </authorList>
    </citation>
    <scope>X-RAY CRYSTALLOGRAPHY (2.0 ANGSTROMS) OF 107-395</scope>
    <scope>PHOSPHORYLATION AT TYR-284</scope>
</reference>
<reference key="37">
    <citation type="journal article" date="2008" name="Bioorg. Med. Chem. Lett.">
        <title>Identification and optimization of N3,N6-diaryl-1H-pyrazolo[3,4-d]pyrimidine-3,6-diamines as a novel class of ACK1 inhibitors.</title>
        <authorList>
            <person name="Kopecky D.J."/>
            <person name="Hao X."/>
            <person name="Chen Y."/>
            <person name="Fu J."/>
            <person name="Jiao X."/>
            <person name="Jaen J.C."/>
            <person name="Cardozo M.G."/>
            <person name="Liu J."/>
            <person name="Wang Z."/>
            <person name="Walker N.P."/>
            <person name="Wesche H."/>
            <person name="Li S."/>
            <person name="Farrelly E."/>
            <person name="Xiao S.H."/>
            <person name="Kayser F."/>
        </authorList>
    </citation>
    <scope>X-RAY CRYSTALLOGRAPHY (2.0 ANGSTROMS) OF 117-392 IN COMPLEX WITH INHIBITOR</scope>
    <scope>CATALYTIC ACTIVITY</scope>
</reference>
<reference key="38">
    <citation type="journal article" date="2007" name="Nature">
        <title>Patterns of somatic mutation in human cancer genomes.</title>
        <authorList>
            <person name="Greenman C."/>
            <person name="Stephens P."/>
            <person name="Smith R."/>
            <person name="Dalgliesh G.L."/>
            <person name="Hunter C."/>
            <person name="Bignell G."/>
            <person name="Davies H."/>
            <person name="Teague J."/>
            <person name="Butler A."/>
            <person name="Stevens C."/>
            <person name="Edkins S."/>
            <person name="O'Meara S."/>
            <person name="Vastrik I."/>
            <person name="Schmidt E.E."/>
            <person name="Avis T."/>
            <person name="Barthorpe S."/>
            <person name="Bhamra G."/>
            <person name="Buck G."/>
            <person name="Choudhury B."/>
            <person name="Clements J."/>
            <person name="Cole J."/>
            <person name="Dicks E."/>
            <person name="Forbes S."/>
            <person name="Gray K."/>
            <person name="Halliday K."/>
            <person name="Harrison R."/>
            <person name="Hills K."/>
            <person name="Hinton J."/>
            <person name="Jenkinson A."/>
            <person name="Jones D."/>
            <person name="Menzies A."/>
            <person name="Mironenko T."/>
            <person name="Perry J."/>
            <person name="Raine K."/>
            <person name="Richardson D."/>
            <person name="Shepherd R."/>
            <person name="Small A."/>
            <person name="Tofts C."/>
            <person name="Varian J."/>
            <person name="Webb T."/>
            <person name="West S."/>
            <person name="Widaa S."/>
            <person name="Yates A."/>
            <person name="Cahill D.P."/>
            <person name="Louis D.N."/>
            <person name="Goldstraw P."/>
            <person name="Nicholson A.G."/>
            <person name="Brasseur F."/>
            <person name="Looijenga L."/>
            <person name="Weber B.L."/>
            <person name="Chiew Y.-E."/>
            <person name="DeFazio A."/>
            <person name="Greaves M.F."/>
            <person name="Green A.R."/>
            <person name="Campbell P."/>
            <person name="Birney E."/>
            <person name="Easton D.F."/>
            <person name="Chenevix-Trench G."/>
            <person name="Tan M.-H."/>
            <person name="Khoo S.K."/>
            <person name="Teh B.T."/>
            <person name="Yuen S.T."/>
            <person name="Leung S.Y."/>
            <person name="Wooster R."/>
            <person name="Futreal P.A."/>
            <person name="Stratton M.R."/>
        </authorList>
    </citation>
    <scope>VARIANTS LEU-34; ARG-71; GLN-99; TRP-99; MET-152; LYS-346; ILE-409; SER-507; LEU-725; GLN-748 AND HIS-1038</scope>
</reference>
<reference key="39">
    <citation type="journal article" date="2013" name="Ann. Neurol.">
        <title>Mutations in TNK2 in severe autosomal recessive infantile onset epilepsy.</title>
        <authorList>
            <person name="Hitomi Y."/>
            <person name="Heinzen E.L."/>
            <person name="Donatello S."/>
            <person name="Dahl H.H."/>
            <person name="Damiano J.A."/>
            <person name="McMahon J.M."/>
            <person name="Berkovic S.F."/>
            <person name="Scheffer I.E."/>
            <person name="Legros B."/>
            <person name="Rai M."/>
            <person name="Weckhuysen S."/>
            <person name="Suls A."/>
            <person name="De Jonghe P."/>
            <person name="Pandolfo M."/>
            <person name="Goldstein D.B."/>
            <person name="Van Bogaert P."/>
            <person name="Depondt C."/>
        </authorList>
    </citation>
    <scope>VARIANT MET-638</scope>
    <scope>INTERACTION WITH NEDD4 AND NEDD4L</scope>
    <scope>CHARACTERIZATION OF VARIANT MET-638</scope>
</reference>
<accession>Q07912</accession>
<accession>Q6ZMQ0</accession>
<accession>Q8N6U7</accession>
<accession>Q96H59</accession>
<feature type="chain" id="PRO_0000088058" description="Activated CDC42 kinase 1">
    <location>
        <begin position="1"/>
        <end position="1038"/>
    </location>
</feature>
<feature type="domain" description="Protein kinase" evidence="3">
    <location>
        <begin position="126"/>
        <end position="385"/>
    </location>
</feature>
<feature type="domain" description="SH3" evidence="4">
    <location>
        <begin position="388"/>
        <end position="448"/>
    </location>
</feature>
<feature type="domain" description="CRIB">
    <location>
        <begin position="454"/>
        <end position="466"/>
    </location>
</feature>
<feature type="domain" description="UBA">
    <location>
        <begin position="958"/>
        <end position="996"/>
    </location>
</feature>
<feature type="region of interest" description="SAM-like domain">
    <location>
        <begin position="1"/>
        <end position="110"/>
    </location>
</feature>
<feature type="region of interest" description="Disordered" evidence="6">
    <location>
        <begin position="90"/>
        <end position="114"/>
    </location>
</feature>
<feature type="region of interest" description="Disordered" evidence="6">
    <location>
        <begin position="497"/>
        <end position="535"/>
    </location>
</feature>
<feature type="region of interest" description="Required for interaction with SRC" evidence="33">
    <location>
        <begin position="623"/>
        <end position="652"/>
    </location>
</feature>
<feature type="region of interest" description="Required for interaction with NEDD4" evidence="1">
    <location>
        <begin position="632"/>
        <end position="635"/>
    </location>
</feature>
<feature type="region of interest" description="Disordered" evidence="6">
    <location>
        <begin position="659"/>
        <end position="702"/>
    </location>
</feature>
<feature type="region of interest" description="Disordered" evidence="6">
    <location>
        <begin position="718"/>
        <end position="840"/>
    </location>
</feature>
<feature type="region of interest" description="EBD domain" evidence="1">
    <location>
        <begin position="733"/>
        <end position="876"/>
    </location>
</feature>
<feature type="region of interest" description="Disordered" evidence="6">
    <location>
        <begin position="917"/>
        <end position="957"/>
    </location>
</feature>
<feature type="compositionally biased region" description="Pro residues" evidence="6">
    <location>
        <begin position="738"/>
        <end position="749"/>
    </location>
</feature>
<feature type="compositionally biased region" description="Pro residues" evidence="6">
    <location>
        <begin position="772"/>
        <end position="783"/>
    </location>
</feature>
<feature type="compositionally biased region" description="Pro residues" evidence="6">
    <location>
        <begin position="794"/>
        <end position="805"/>
    </location>
</feature>
<feature type="active site" description="Proton acceptor">
    <location>
        <position position="252"/>
    </location>
</feature>
<feature type="binding site">
    <location>
        <begin position="132"/>
        <end position="140"/>
    </location>
    <ligand>
        <name>ATP</name>
        <dbReference type="ChEBI" id="CHEBI:30616"/>
    </ligand>
</feature>
<feature type="binding site">
    <location>
        <position position="158"/>
    </location>
    <ligand>
        <name>ATP</name>
        <dbReference type="ChEBI" id="CHEBI:30616"/>
    </ligand>
</feature>
<feature type="modified residue" description="Phosphotyrosine; by SRC and autocatalysis" evidence="12 17 28 30 31 32 33 40">
    <location>
        <position position="284"/>
    </location>
</feature>
<feature type="modified residue" description="Phosphotyrosine" evidence="32">
    <location>
        <position position="518"/>
    </location>
</feature>
<feature type="modified residue" description="Phosphoserine" evidence="40">
    <location>
        <position position="724"/>
    </location>
</feature>
<feature type="modified residue" description="Phosphotyrosine" evidence="32">
    <location>
        <position position="827"/>
    </location>
</feature>
<feature type="modified residue" description="Omega-N-methylarginine" evidence="2">
    <location>
        <position position="839"/>
    </location>
</feature>
<feature type="modified residue" description="Phosphotyrosine" evidence="32">
    <location>
        <position position="859"/>
    </location>
</feature>
<feature type="modified residue" description="Phosphotyrosine" evidence="32">
    <location>
        <position position="872"/>
    </location>
</feature>
<feature type="modified residue" description="Phosphoserine" evidence="39">
    <location>
        <position position="881"/>
    </location>
</feature>
<feature type="splice variant" id="VSP_037284" description="In isoform 3." evidence="36">
    <original>M</original>
    <variation>MGERSAYQRLAGGEEGPQRLGGGRM</variation>
    <location>
        <position position="1"/>
    </location>
</feature>
<feature type="splice variant" id="VSP_008655" description="In isoform 2." evidence="37">
    <original>LYLGNPMDPPDLLSVELSTSRPPQHLGGVKKPTYDPVSEDQDPL</original>
    <variation>CPFSAFSPGHPPAETCGQVLWTGRREACASDPRLHPVSSRTKGL</variation>
    <location>
        <begin position="485"/>
        <end position="528"/>
    </location>
</feature>
<feature type="splice variant" id="VSP_037285" description="In isoform 3." evidence="36">
    <original>K</original>
    <variation>KREPPPRPPQPAFFTQ</variation>
    <location>
        <position position="514"/>
    </location>
</feature>
<feature type="splice variant" id="VSP_008656" description="In isoform 2." evidence="37">
    <location>
        <begin position="529"/>
        <end position="1038"/>
    </location>
</feature>
<feature type="splice variant" id="VSP_037286" description="In isoform 3." evidence="36">
    <location>
        <begin position="965"/>
        <end position="994"/>
    </location>
</feature>
<feature type="sequence variant" id="VAR_032792" description="In a lung adenocarcinoma sample; somatic mutation; increased autophosphorylation at Y-284; increased function in phosphorylation of peptide substrates; no effect on subcellular localization to perinuclear region." evidence="19 27">
    <original>R</original>
    <variation>L</variation>
    <location>
        <position position="34"/>
    </location>
</feature>
<feature type="sequence variant" id="VAR_032793" description="In dbSNP:rs56036945." evidence="19">
    <original>K</original>
    <variation>R</variation>
    <location>
        <position position="71"/>
    </location>
</feature>
<feature type="sequence variant" id="VAR_032794" description="In an ovarian mucinous carcinoma sample; somatic mutation; increased autophosphorylation at Y-284; increased function in phosphorylation of peptide substrates and WASP; no effect on subcellular localization to perinuclear region; dbSNP:rs113498671." evidence="19 27">
    <original>R</original>
    <variation>Q</variation>
    <location>
        <position position="99"/>
    </location>
</feature>
<feature type="sequence variant" id="VAR_032795" description="In dbSNP:rs3747673." evidence="19">
    <original>R</original>
    <variation>W</variation>
    <location>
        <position position="99"/>
    </location>
</feature>
<feature type="sequence variant" id="VAR_032796" description="In dbSNP:rs56161912." evidence="19">
    <original>T</original>
    <variation>M</variation>
    <location>
        <position position="152"/>
    </location>
</feature>
<feature type="sequence variant" id="VAR_032797" description="In an ovarian endometrioid cancer sample; somatic mutation; undergoes autoactivation and causes phosphorylation on Y-284 leading to activation of AKT1; increased autophosphorylation at Y-284; increased function in phosphorylation of peptide substrates and WASP; no effect on catalytic activity itself as the purified kinase domain has activity in vitro comparable to wild-type protein; no effect on subcellular localization to perinuclear region; dbSNP:rs970946035." evidence="19 27 28">
    <original>E</original>
    <variation>K</variation>
    <location>
        <position position="346"/>
    </location>
</feature>
<feature type="sequence variant" id="VAR_032798" description="In a gastric adenocarcinoma sample; somatic mutation; increased autophosphorylation at Y-284; increased function in phosphorylation of peptide substrates and WASP; no effect on subcellular localization to perinuclear region." evidence="19 27">
    <original>M</original>
    <variation>I</variation>
    <location>
        <position position="409"/>
    </location>
</feature>
<feature type="sequence variant" id="VAR_032799" description="In dbSNP:rs35759128." evidence="19">
    <original>P</original>
    <variation>S</variation>
    <location>
        <position position="507"/>
    </location>
</feature>
<feature type="sequence variant" id="VAR_076966" description="Found in patients with childhood-onset epilepsy; uncertain significance; loss of interaction with NEDD4 and NEDD4L; increased protein abundance; dbSNP:rs201407161." evidence="34">
    <original>V</original>
    <variation>M</variation>
    <location>
        <position position="638"/>
    </location>
</feature>
<feature type="sequence variant" id="VAR_032800" description="In dbSNP:rs56260729." evidence="10 19">
    <original>P</original>
    <variation>L</variation>
    <location>
        <position position="725"/>
    </location>
</feature>
<feature type="sequence variant" id="VAR_032801" description="In dbSNP:rs57872314." evidence="19">
    <original>R</original>
    <variation>Q</variation>
    <location>
        <position position="748"/>
    </location>
</feature>
<feature type="sequence variant" id="VAR_057115" description="In dbSNP:rs3749333.">
    <original>P</original>
    <variation>L</variation>
    <location>
        <position position="802"/>
    </location>
</feature>
<feature type="sequence variant" id="VAR_032802" description="In dbSNP:rs13433937." evidence="19">
    <original>R</original>
    <variation>H</variation>
    <location>
        <position position="1038"/>
    </location>
</feature>
<feature type="mutagenesis site" description="No effect on autophosphorylation at Y-284." evidence="27">
    <original>L</original>
    <variation>Q</variation>
    <location>
        <position position="120"/>
    </location>
</feature>
<feature type="mutagenesis site" description="Loss of autophosphorylation at Y-284." evidence="16 27">
    <original>K</original>
    <variation>R</variation>
    <location>
        <position position="158"/>
    </location>
</feature>
<feature type="mutagenesis site" description="No effect on autophosphorylation at Y-284." evidence="27">
    <original>L</original>
    <variation>Q</variation>
    <location>
        <position position="197"/>
    </location>
</feature>
<feature type="mutagenesis site" description="Increased autophosphorylation at Y-284." evidence="27">
    <original>V</original>
    <variation>R</variation>
    <location>
        <position position="365"/>
    </location>
</feature>
<feature type="mutagenesis site" description="Constantly active kinase." evidence="16">
    <original>L</original>
    <variation>F</variation>
    <location>
        <position position="487"/>
    </location>
</feature>
<feature type="sequence conflict" description="In Ref. 4; AAH08884." evidence="38" ref="4">
    <original>G</original>
    <variation>V</variation>
    <location>
        <position position="138"/>
    </location>
</feature>
<feature type="sequence conflict" description="In Ref. 4; AAH08884." evidence="38" ref="4">
    <original>TRTFSHASDTWMFGVTLWEMFTYGQEPWIGLNGSQILHKIDKEGERLPR</original>
    <variation>PPWRDISASSSTQFPHAVPCFPTSLLAKLLLRHSVPASSREIKLVSILC</variation>
    <location>
        <begin position="304"/>
        <end position="352"/>
    </location>
</feature>
<feature type="sequence conflict" description="In Ref. 4; AAH08884." evidence="38" ref="4">
    <location>
        <begin position="353"/>
        <end position="1038"/>
    </location>
</feature>
<feature type="sequence conflict" description="In Ref. 1; AAA53570." evidence="38" ref="1">
    <original>A</original>
    <variation>P</variation>
    <location>
        <position position="586"/>
    </location>
</feature>
<feature type="sequence conflict" description="In Ref. 1; AAA53570." evidence="38" ref="1">
    <location>
        <position position="722"/>
    </location>
</feature>
<feature type="sequence conflict" description="In Ref. 1; AAA53570." evidence="38" ref="1">
    <original>PRA</original>
    <variation>AG</variation>
    <location>
        <begin position="838"/>
        <end position="840"/>
    </location>
</feature>
<feature type="strand" evidence="46">
    <location>
        <begin position="118"/>
        <end position="120"/>
    </location>
</feature>
<feature type="helix" evidence="45">
    <location>
        <begin position="123"/>
        <end position="125"/>
    </location>
</feature>
<feature type="strand" evidence="45">
    <location>
        <begin position="126"/>
        <end position="133"/>
    </location>
</feature>
<feature type="strand" evidence="45">
    <location>
        <begin position="140"/>
        <end position="146"/>
    </location>
</feature>
<feature type="strand" evidence="43">
    <location>
        <begin position="148"/>
        <end position="150"/>
    </location>
</feature>
<feature type="strand" evidence="45">
    <location>
        <begin position="152"/>
        <end position="159"/>
    </location>
</feature>
<feature type="turn" evidence="44">
    <location>
        <begin position="164"/>
        <end position="166"/>
    </location>
</feature>
<feature type="helix" evidence="45">
    <location>
        <begin position="171"/>
        <end position="181"/>
    </location>
</feature>
<feature type="strand" evidence="45">
    <location>
        <begin position="192"/>
        <end position="196"/>
    </location>
</feature>
<feature type="strand" evidence="45">
    <location>
        <begin position="198"/>
        <end position="200"/>
    </location>
</feature>
<feature type="strand" evidence="45">
    <location>
        <begin position="202"/>
        <end position="206"/>
    </location>
</feature>
<feature type="strand" evidence="47">
    <location>
        <begin position="209"/>
        <end position="212"/>
    </location>
</feature>
<feature type="helix" evidence="45">
    <location>
        <begin position="213"/>
        <end position="219"/>
    </location>
</feature>
<feature type="helix" evidence="45">
    <location>
        <begin position="221"/>
        <end position="223"/>
    </location>
</feature>
<feature type="helix" evidence="45">
    <location>
        <begin position="226"/>
        <end position="245"/>
    </location>
</feature>
<feature type="helix" evidence="45">
    <location>
        <begin position="255"/>
        <end position="257"/>
    </location>
</feature>
<feature type="strand" evidence="45">
    <location>
        <begin position="258"/>
        <end position="262"/>
    </location>
</feature>
<feature type="strand" evidence="45">
    <location>
        <begin position="265"/>
        <end position="268"/>
    </location>
</feature>
<feature type="helix" evidence="46">
    <location>
        <begin position="273"/>
        <end position="276"/>
    </location>
</feature>
<feature type="strand" evidence="42">
    <location>
        <begin position="283"/>
        <end position="285"/>
    </location>
</feature>
<feature type="helix" evidence="43">
    <location>
        <begin position="288"/>
        <end position="290"/>
    </location>
</feature>
<feature type="helix" evidence="45">
    <location>
        <begin position="294"/>
        <end position="296"/>
    </location>
</feature>
<feature type="helix" evidence="45">
    <location>
        <begin position="299"/>
        <end position="304"/>
    </location>
</feature>
<feature type="strand" evidence="42">
    <location>
        <begin position="306"/>
        <end position="308"/>
    </location>
</feature>
<feature type="helix" evidence="45">
    <location>
        <begin position="309"/>
        <end position="324"/>
    </location>
</feature>
<feature type="turn" evidence="46">
    <location>
        <begin position="325"/>
        <end position="327"/>
    </location>
</feature>
<feature type="turn" evidence="45">
    <location>
        <begin position="330"/>
        <end position="333"/>
    </location>
</feature>
<feature type="helix" evidence="45">
    <location>
        <begin position="336"/>
        <end position="344"/>
    </location>
</feature>
<feature type="helix" evidence="45">
    <location>
        <begin position="358"/>
        <end position="367"/>
    </location>
</feature>
<feature type="helix" evidence="45">
    <location>
        <begin position="372"/>
        <end position="374"/>
    </location>
</feature>
<feature type="helix" evidence="45">
    <location>
        <begin position="378"/>
        <end position="387"/>
    </location>
</feature>
<feature type="strand" evidence="46">
    <location>
        <begin position="392"/>
        <end position="394"/>
    </location>
</feature>
<feature type="strand" evidence="46">
    <location>
        <begin position="402"/>
        <end position="404"/>
    </location>
</feature>
<feature type="strand" evidence="46">
    <location>
        <begin position="412"/>
        <end position="417"/>
    </location>
</feature>
<feature type="strand" evidence="46">
    <location>
        <begin position="419"/>
        <end position="421"/>
    </location>
</feature>
<feature type="strand" evidence="46">
    <location>
        <begin position="423"/>
        <end position="432"/>
    </location>
</feature>
<feature type="strand" evidence="46">
    <location>
        <begin position="435"/>
        <end position="439"/>
    </location>
</feature>
<feature type="helix" evidence="46">
    <location>
        <begin position="440"/>
        <end position="443"/>
    </location>
</feature>
<feature type="strand" evidence="41">
    <location>
        <begin position="449"/>
        <end position="451"/>
    </location>
</feature>
<feature type="turn" evidence="41">
    <location>
        <begin position="484"/>
        <end position="486"/>
    </location>
</feature>